<comment type="function">
    <text evidence="1 8 10 11 12 14 15 16 19 26 29 30 33 34 35">Endonuclease that cooperates with the MRE11-RAD50-NBN (MRN) complex in DNA-end resection, the first step of double-strand break (DSB) repair through the homologous recombination (HR) pathway (PubMed:17965729, PubMed:19202191, PubMed:19759395, PubMed:20064462, PubMed:23273981, PubMed:26721387, PubMed:27814491, PubMed:27889449, PubMed:30787182). HR is restricted to S and G2 phases of the cell cycle and preferentially repairs DSBs resulting from replication fork collapse (PubMed:17965729, PubMed:19202191, PubMed:23273981, PubMed:27814491, PubMed:27889449, PubMed:30787182). Key determinant of DSB repair pathway choice, as it commits cells to HR by preventing classical non-homologous end-joining (NHEJ) (PubMed:19202191). Specifically promotes the endonuclease activity of the MRN complex to clear DNA ends containing protein adducts: recruited to DSBs by NBN following phosphorylation by CDK1, and promotes the endonuclease activity of MRE11 to clear protein-DNA adducts and generate clean double-strand break ends (PubMed:27814491, PubMed:27889449, PubMed:30787182, PubMed:33836577). Functions downstream of the MRN complex and ATM, promotes ATR activation and its recruitment to DSBs in the S/G2 phase facilitating the generation of ssDNA (PubMed:16581787, PubMed:17965729, PubMed:19759395, PubMed:20064462). Component of the BRCA1-RBBP8 complex that regulates CHEK1 activation and controls cell cycle G2/M checkpoints on DNA damage (PubMed:15485915, PubMed:16818604). During immunoglobulin heavy chain class-switch recombination, promotes microhomology-mediated alternative end joining (A-NHEJ) and plays an essential role in chromosomal translocations (By similarity). Binds preferentially to DNA Y-junctions and to DNA substrates with blocked ends and promotes intermolecular DNA bridging (PubMed:30601117).</text>
</comment>
<comment type="subunit">
    <text evidence="3 5 6 7 8 9 11 12 15 20 21 23 24 25 26 27 28 31 32 33 36 38 39">Homotetramer; formed by antiparallel association of helical extensions protruding from the N-termini of two parallel coiled-coil dimers (PubMed:15084581, PubMed:25558984, PubMed:30601117, PubMed:34129781). Forms a dumbbell-shaped particle in which polar globular domains are held about 30 nm apart by a central rod (PubMed:30601117). Homotetramerization is required for DNA-end resection and repair (PubMed:25558984). Interacts (via the PXDLS motif) with CTBP1; the interaction is disrupted via binding of the adenovirus E1A to CTBP1 (PubMed:9535825). Component of the BRCA1-RBBP8 complex. Interacts (the Ser-327 phosphorylated form) with BRCA1 (via the C-terminal BRCT domains): the interaction occurs in the G2 phase, ubiquitinates RBBP8 and involves RBBP8 in BRCA1-dependent G2/M checkpoint control on DNA damage (PubMed:10764811, PubMed:15485915, PubMed:16101277, PubMed:16818604, PubMed:17965729, PubMed:23623683). Interacts with RB1 (PubMed:9721205). Interacts with the MRN complex; interacts directly with MRE11; the interaction is required for efficient homologous recombination (HR) and regulation of the MRN complex (PubMed:19759395, PubMed:23623683, PubMed:25558984). Interacts directly with RAD50 (PubMed:19759395, PubMed:25558984). Interacts (when phosphorylated by CDK1) with NBN; promoting association with the MRN complex (PubMed:19759395, PubMed:25558984). Interacts with LM04 (via the LIM zinc-binding 1 domain) (PubMed:11751867, PubMed:23353824). Interacts with SIAH1 (PubMed:14654780). Interacts with RNF138 (PubMed:26502057). Interacts with EXD2 (PubMed:26807646). Interacts with CUL3 and KLHL15; this interaction leads to RBBP8 proteasomal degradation (PubMed:27561354). Directly interacts with PIN1; this interaction depends upon RBBP8 phosphorylation, predominantly at Thr-315 (PubMed:23623683). Interacts with FZR1; this interaction leads to APC/C-mediated RBBP8 proteasomal degradation (PubMed:25349192). Interacts with AUNIP; leading to recruitment of RBBP8 to sites of DNA damage (PubMed:10764811, PubMed:11751867, PubMed:14654780, PubMed:15084581, PubMed:15485915, PubMed:16818604, PubMed:17965729, PubMed:19759395, PubMed:23623683, PubMed:25349192, PubMed:26502057, PubMed:26807646, PubMed:27561354, PubMed:29042561, PubMed:9535825, PubMed:9721205). Interacts with SAMHD1 (PubMed:28834754). Interacts with HDGFL2 (PubMed:26721387).</text>
</comment>
<comment type="interaction">
    <interactant intactId="EBI-745715">
        <id>Q99708</id>
    </interactant>
    <interactant intactId="EBI-349905">
        <id>P38398</id>
        <label>BRCA1</label>
    </interactant>
    <organismsDiffer>false</organismsDiffer>
    <experiments>15</experiments>
</comment>
<comment type="interaction">
    <interactant intactId="EBI-745715">
        <id>Q99708</id>
    </interactant>
    <interactant intactId="EBI-11324738">
        <id>Q9NVH0</id>
        <label>EXD2</label>
    </interactant>
    <organismsDiffer>false</organismsDiffer>
    <experiments>3</experiments>
</comment>
<comment type="interaction">
    <interactant intactId="EBI-745715">
        <id>Q99708</id>
    </interactant>
    <interactant intactId="EBI-944667">
        <id>Q9UQ84</id>
        <label>EXO1</label>
    </interactant>
    <organismsDiffer>false</organismsDiffer>
    <experiments>4</experiments>
</comment>
<comment type="interaction">
    <interactant intactId="EBI-745715">
        <id>Q99708</id>
    </interactant>
    <interactant intactId="EBI-396513">
        <id>P49959</id>
        <label>MRE11</label>
    </interactant>
    <organismsDiffer>false</organismsDiffer>
    <experiments>3</experiments>
</comment>
<comment type="interaction">
    <interactant intactId="EBI-745715">
        <id>Q99708</id>
    </interactant>
    <interactant intactId="EBI-494844">
        <id>O60934</id>
        <label>NBN</label>
    </interactant>
    <organismsDiffer>false</organismsDiffer>
    <experiments>2</experiments>
</comment>
<comment type="interaction">
    <interactant intactId="EBI-745715">
        <id>Q99708</id>
    </interactant>
    <interactant intactId="EBI-1801773">
        <id>O75475</id>
        <label>PSIP1</label>
    </interactant>
    <organismsDiffer>false</organismsDiffer>
    <experiments>4</experiments>
</comment>
<comment type="interaction">
    <interactant intactId="EBI-745715">
        <id>Q99708</id>
    </interactant>
    <interactant intactId="EBI-491274">
        <id>P06400</id>
        <label>RB1</label>
    </interactant>
    <organismsDiffer>false</organismsDiffer>
    <experiments>2</experiments>
</comment>
<comment type="interaction">
    <interactant intactId="EBI-745715">
        <id>Q99708</id>
    </interactant>
    <interactant intactId="EBI-745715">
        <id>Q99708</id>
        <label>RBBP8</label>
    </interactant>
    <organismsDiffer>false</organismsDiffer>
    <experiments>4</experiments>
</comment>
<comment type="interaction">
    <interactant intactId="EBI-10203615">
        <id>Q99708-2</id>
    </interactant>
    <interactant intactId="EBI-8639312">
        <id>P25800</id>
        <label>LMO1</label>
    </interactant>
    <organismsDiffer>false</organismsDiffer>
    <experiments>3</experiments>
</comment>
<comment type="interaction">
    <interactant intactId="EBI-10203615">
        <id>Q99708-2</id>
    </interactant>
    <interactant intactId="EBI-2798728">
        <id>P61968</id>
        <label>LMO4</label>
    </interactant>
    <organismsDiffer>false</organismsDiffer>
    <experiments>3</experiments>
</comment>
<comment type="interaction">
    <interactant intactId="EBI-10203615">
        <id>Q99708-2</id>
    </interactant>
    <interactant intactId="EBI-714158">
        <id>Q13526</id>
        <label>PIN1</label>
    </interactant>
    <organismsDiffer>false</organismsDiffer>
    <experiments>3</experiments>
</comment>
<comment type="interaction">
    <interactant intactId="EBI-10203615">
        <id>Q99708-2</id>
    </interactant>
    <interactant intactId="EBI-971439">
        <id>Q08999</id>
        <label>RBL2</label>
    </interactant>
    <organismsDiffer>false</organismsDiffer>
    <experiments>3</experiments>
</comment>
<comment type="subcellular location">
    <subcellularLocation>
        <location evidence="3 12 21">Nucleus</location>
    </subcellularLocation>
    <subcellularLocation>
        <location evidence="3 11 29 30 32 35">Chromosome</location>
    </subcellularLocation>
    <text evidence="3 11 23 29 30 35">Associates with sites of DNA damage in S/G2 phase (PubMed:10764811, PubMed:25349192). Recruited to DSBs by the MRE11-RAD50-NBN (MRN) complex following phosphorylation by CDK1, which promotes interaction with NBN (PubMed:27814491, PubMed:27889449, PubMed:33836577). Ubiquitinated RBBP8 binds to chromatin following DNA damage (PubMed:16818604).</text>
</comment>
<comment type="alternative products">
    <event type="alternative splicing"/>
    <isoform>
        <id>Q99708-1</id>
        <name>1</name>
        <sequence type="displayed"/>
    </isoform>
    <isoform>
        <id>Q99708-2</id>
        <name>2</name>
        <sequence type="described" ref="VSP_043220"/>
    </isoform>
    <isoform>
        <id>Q99708-3</id>
        <name>3</name>
        <sequence type="described" ref="VSP_045247 VSP_045248"/>
    </isoform>
</comment>
<comment type="tissue specificity">
    <text evidence="13">Expressed in ER-positive breast cancer lines, but tends to be down-regulated ER-negative cells (at protein level).</text>
</comment>
<comment type="induction">
    <text evidence="13 23">Expression is cell-cycle regulated. Levels increase as dividing cells traverse the G1/S boundary (PubMed:18171986). The protein is degraded by the proteasome pathway during mitotic exit. Also degraded in response to DNA damage in G2 cells; this degradation is mediated by the E3 FZR1/APC/C complex (PubMed:25349192).</text>
</comment>
<comment type="domain">
    <text evidence="38">The PXDLS motif binds to a cleft in CtBP proteins.</text>
</comment>
<comment type="domain">
    <text evidence="16">The damage-recruitment motif is required for DNA binding and translocation to sites of DNA damage.</text>
</comment>
<comment type="PTM">
    <text evidence="4 8 12 14 19 21 29 30 33 35">Hyperphosphorylation upon ionizing radiation results in dissociation from BRCA1 (PubMed:10910365, PubMed:17965729). Phosphorylation at Thr-847 by CDK1 is essential for the recruitment to DNA and the DNA repair function (PubMed:19202191, PubMed:27814491, PubMed:27889449). Phosphorylation at Thr-847 and Thr-859 promote interaction with NBN and recruitment to double-strand breaks (DSBs) (PubMed:23273981, PubMed:27814491, PubMed:27889449, PubMed:33836577). Phosphorylated on Ser-327 as cells enter G2 phase (PubMed:15485915). This phosphorylation is required for binding BRCA1 and for the G2/M DNA damage transition checkpoint control (PubMed:15485915). Phosphorylation at Thr-315, probably catalyzed by CDK2, is required for PIN1-binding, while phosphorylation at Ser-276 serves as a PIN1 isomerization site (PubMed:23623683). Phosphorylation at Thr-315 is cell-cycle dependent (PubMed:23623683). It steadily increases during S phase, peaks at late S/G2 phase, and drops at G1 (PubMed:23623683). Phosphorylation is not required for tetramerization (PubMed:30601117). Binds to DNA more strongly when dephosphorylated (PubMed:30601117).</text>
</comment>
<comment type="PTM">
    <text evidence="6 11 23 25 28 37">Ubiquitinated (PubMed:14654780, PubMed:16818604, PubMed:27561354). Ubiquitination at multiple sites by BRCA1 (via its N-terminal RING domain) does not lead to its proteasomal degradation but instead the ubiquitinated RBBP8 binds to chromatin following DNA damage and may play a role in G2/M checkpoint control (PubMed:16818604). Ubiquitinated by RNF138 at its N-terminus (PubMed:26502057). Ubiquitinated through 'Lys-48' by the E3 CUL3-KLHL15 complex; this modification leads to proteasomal degradation (PubMed:27561354, PubMed:35219381). Ubiquitinated by the E3 FZR1/APC/C complex; this modification leads to proteasomal degradation (PubMed:25349192).</text>
</comment>
<comment type="disease" evidence="18 22">
    <disease id="DI-03353">
        <name>Seckel syndrome 2</name>
        <acronym>SCKL2</acronym>
        <description>A rare autosomal recessive disorder characterized by proportionate dwarfism of prenatal onset associated with low birth weight, growth retardation, severe microcephaly with a bird-headed like appearance, and intellectual disability.</description>
        <dbReference type="MIM" id="606744"/>
    </disease>
    <text>The disease is caused by variants affecting the gene represented in this entry.</text>
</comment>
<comment type="disease" evidence="18">
    <disease id="DI-03354">
        <name>Jawad syndrome</name>
        <acronym>JWDS</acronym>
        <description>A syndrome characterized by congenital microcephaly, moderately severe intellectual disability, and symmetrical digital anomalies. Digital malformations of variable degree include hallux valgus, syndactyly of toes 4 and 5, short fifth fingers, single flexion crease of fifth fingers, polydactyly and synpolydactyly.</description>
        <dbReference type="MIM" id="251255"/>
    </disease>
    <text>The disease is caused by variants affecting the gene represented in this entry.</text>
</comment>
<comment type="disease">
    <text evidence="13 17">Genetic variability in RBBP8 is noted as a factor in BRCA1-associated breast cancer risk (PubMed:21799032). Associated with sensitivity to tamoxifen in certain breast cancer cell lines (PubMed:18171986).</text>
</comment>
<comment type="miscellaneous">
    <text evidence="24">Binds one Zn(2+) atom per dimer. Zn(2+)-binding is not required for homotetramerization.</text>
</comment>
<comment type="similarity">
    <text evidence="42">Belongs to the COM1/SAE2/CtIP family.</text>
</comment>
<comment type="caution">
    <text evidence="43 44">Upon DNA damage, was shown to interact with SIRT6 resulting in its deacetylation. However, this study was later retracted.</text>
</comment>
<comment type="online information" name="Atlas of Genetics and Cytogenetics in Oncology and Haematology">
    <link uri="https://atlasgeneticsoncology.org/gene/42066/RBBP8"/>
</comment>
<feature type="chain" id="PRO_0000097179" description="DNA endonuclease RBBP8">
    <location>
        <begin position="1"/>
        <end position="897"/>
    </location>
</feature>
<feature type="region of interest" description="Essential for binding to the MRN complex and for RPA focus formation on DNA damage">
    <location>
        <begin position="22"/>
        <end position="45"/>
    </location>
</feature>
<feature type="region of interest" description="Required for interaction with LMO4, probably by stabilizing the interaction through RPPB8 dimerization" evidence="20">
    <location>
        <begin position="45"/>
        <end position="160"/>
    </location>
</feature>
<feature type="region of interest" description="Disordered" evidence="2">
    <location>
        <begin position="292"/>
        <end position="325"/>
    </location>
</feature>
<feature type="region of interest" description="Disordered" evidence="2">
    <location>
        <begin position="419"/>
        <end position="464"/>
    </location>
</feature>
<feature type="region of interest" description="Damage-recruitment motif" evidence="16">
    <location>
        <begin position="509"/>
        <end position="557"/>
    </location>
</feature>
<feature type="region of interest" description="Required for interaction with LMO4, probably by making physical contact with LMO4" evidence="20">
    <location>
        <begin position="641"/>
        <end position="685"/>
    </location>
</feature>
<feature type="region of interest" description="Disordered" evidence="2">
    <location>
        <begin position="704"/>
        <end position="723"/>
    </location>
</feature>
<feature type="region of interest" description="Disordered" evidence="2">
    <location>
        <begin position="873"/>
        <end position="897"/>
    </location>
</feature>
<feature type="coiled-coil region" evidence="36">
    <location>
        <begin position="35"/>
        <end position="84"/>
    </location>
</feature>
<feature type="coiled-coil region" evidence="36">
    <location>
        <begin position="117"/>
        <end position="138"/>
    </location>
</feature>
<feature type="short sequence motif" description="PXDLS motif" evidence="38">
    <location>
        <begin position="490"/>
        <end position="494"/>
    </location>
</feature>
<feature type="short sequence motif" description="KLHL15-binding" evidence="28">
    <location>
        <begin position="840"/>
        <end position="842"/>
    </location>
</feature>
<feature type="compositionally biased region" description="Basic and acidic residues" evidence="2">
    <location>
        <begin position="292"/>
        <end position="307"/>
    </location>
</feature>
<feature type="compositionally biased region" description="Basic and acidic residues" evidence="2">
    <location>
        <begin position="420"/>
        <end position="436"/>
    </location>
</feature>
<feature type="modified residue" description="Phosphoserine" evidence="49">
    <location>
        <position position="233"/>
    </location>
</feature>
<feature type="modified residue" description="Phosphoserine" evidence="21">
    <location>
        <position position="276"/>
    </location>
</feature>
<feature type="modified residue" description="Phosphothreonine; by CDK2" evidence="21 49">
    <location>
        <position position="315"/>
    </location>
</feature>
<feature type="modified residue" description="Phosphoserine" evidence="12">
    <location>
        <position position="326"/>
    </location>
</feature>
<feature type="modified residue" description="Phosphoserine" evidence="8 49">
    <location>
        <position position="327"/>
    </location>
</feature>
<feature type="modified residue" description="Phosphoserine" evidence="12">
    <location>
        <position position="349"/>
    </location>
</feature>
<feature type="modified residue" description="Phosphoserine" evidence="49">
    <location>
        <position position="379"/>
    </location>
</feature>
<feature type="modified residue" description="Phosphoserine; by ATM" evidence="4">
    <location>
        <position position="664"/>
    </location>
</feature>
<feature type="modified residue" description="Phosphoserine" evidence="12">
    <location>
        <position position="679"/>
    </location>
</feature>
<feature type="modified residue" description="Phosphoserine" evidence="48 49">
    <location>
        <position position="723"/>
    </location>
</feature>
<feature type="modified residue" description="Phosphoserine; by ATM" evidence="4">
    <location>
        <position position="745"/>
    </location>
</feature>
<feature type="modified residue" description="Phosphothreonine; by CDK1" evidence="29 35">
    <location>
        <position position="847"/>
    </location>
</feature>
<feature type="modified residue" description="Phosphothreonine; by ATR" evidence="14 19 29 30 35">
    <location>
        <position position="859"/>
    </location>
</feature>
<feature type="cross-link" description="Glycyl lysine isopeptide (Lys-Gly) (interchain with G-Cter in SUMO2)" evidence="52">
    <location>
        <position position="62"/>
    </location>
</feature>
<feature type="cross-link" description="Glycyl lysine isopeptide (Lys-Gly) (interchain with G-Cter in SUMO2)" evidence="52">
    <location>
        <position position="115"/>
    </location>
</feature>
<feature type="cross-link" description="Glycyl lysine isopeptide (Lys-Gly) (interchain with G-Cter in SUMO2)" evidence="51 52">
    <location>
        <position position="193"/>
    </location>
</feature>
<feature type="cross-link" description="Glycyl lysine isopeptide (Lys-Gly) (interchain with G-Cter in SUMO2)" evidence="52">
    <location>
        <position position="360"/>
    </location>
</feature>
<feature type="cross-link" description="Glycyl lysine isopeptide (Lys-Gly) (interchain with G-Cter in SUMO2)" evidence="51 52">
    <location>
        <position position="378"/>
    </location>
</feature>
<feature type="cross-link" description="Glycyl lysine isopeptide (Lys-Gly) (interchain with G-Cter in SUMO2)" evidence="52">
    <location>
        <position position="396"/>
    </location>
</feature>
<feature type="cross-link" description="Glycyl lysine isopeptide (Lys-Gly) (interchain with G-Cter in SUMO2)" evidence="52">
    <location>
        <position position="404"/>
    </location>
</feature>
<feature type="cross-link" description="Glycyl lysine isopeptide (Lys-Gly) (interchain with G-Cter in SUMO2)" evidence="52">
    <location>
        <position position="410"/>
    </location>
</feature>
<feature type="cross-link" description="Glycyl lysine isopeptide (Lys-Gly) (interchain with G-Cter in SUMO2)" evidence="52">
    <location>
        <position position="438"/>
    </location>
</feature>
<feature type="cross-link" description="Glycyl lysine isopeptide (Lys-Gly) (interchain with G-Cter in SUMO2)" evidence="52">
    <location>
        <position position="449"/>
    </location>
</feature>
<feature type="cross-link" description="Glycyl lysine isopeptide (Lys-Gly) (interchain with G-Cter in SUMO2); alternate" evidence="52">
    <location>
        <position position="526"/>
    </location>
</feature>
<feature type="cross-link" description="Glycyl lysine isopeptide (Lys-Gly) (interchain with G-Cter in SUMO2)" evidence="52">
    <location>
        <position position="530"/>
    </location>
</feature>
<feature type="cross-link" description="Glycyl lysine isopeptide (Lys-Gly) (interchain with G-Cter in SUMO2)" evidence="52">
    <location>
        <position position="572"/>
    </location>
</feature>
<feature type="cross-link" description="Glycyl lysine isopeptide (Lys-Gly) (interchain with G-Cter in SUMO2)" evidence="52">
    <location>
        <position position="578"/>
    </location>
</feature>
<feature type="cross-link" description="Glycyl lysine isopeptide (Lys-Gly) (interchain with G-Cter in SUMO2); alternate" evidence="51 52">
    <location>
        <position position="604"/>
    </location>
</feature>
<feature type="cross-link" description="Glycyl lysine isopeptide (Lys-Gly) (interchain with G-Cter in SUMO2)" evidence="51 52">
    <location>
        <position position="613"/>
    </location>
</feature>
<feature type="cross-link" description="Glycyl lysine isopeptide (Lys-Gly) (interchain with G-Cter in SUMO2)" evidence="52">
    <location>
        <position position="638"/>
    </location>
</feature>
<feature type="cross-link" description="Glycyl lysine isopeptide (Lys-Gly) (interchain with G-Cter in SUMO2)" evidence="52">
    <location>
        <position position="640"/>
    </location>
</feature>
<feature type="cross-link" description="Glycyl lysine isopeptide (Lys-Gly) (interchain with G-Cter in SUMO2)" evidence="52">
    <location>
        <position position="676"/>
    </location>
</feature>
<feature type="cross-link" description="Glycyl lysine isopeptide (Lys-Gly) (interchain with G-Cter in SUMO2)" evidence="52">
    <location>
        <position position="719"/>
    </location>
</feature>
<feature type="cross-link" description="Glycyl lysine isopeptide (Lys-Gly) (interchain with G-Cter in SUMO2)" evidence="52">
    <location>
        <position position="782"/>
    </location>
</feature>
<feature type="cross-link" description="Glycyl lysine isopeptide (Lys-Gly) (interchain with G-Cter in SUMO2)" evidence="50 51 52">
    <location>
        <position position="869"/>
    </location>
</feature>
<feature type="splice variant" id="VSP_043220" description="In isoform 2." evidence="40">
    <original>S</original>
    <variation>SMLFYI</variation>
    <location>
        <position position="714"/>
    </location>
</feature>
<feature type="splice variant" id="VSP_045247" description="In isoform 3." evidence="41">
    <original>RETSLQNFPHIEVVRKKEERRKLLGHTCKECEIYYADMPAEEREKKLASCSRHRFRYIPPNTPENFWEVGFPSTQTCMERGY</original>
    <variation>SIMQICQQKKEKRNWLPAQDTDSATFHPTHQRIFGKLVFLPLRLVWKEVILRKILILVLVQKDVSLTTQYFLQKARSRRHRR</variation>
    <location>
        <begin position="786"/>
        <end position="867"/>
    </location>
</feature>
<feature type="splice variant" id="VSP_045248" description="In isoform 3." evidence="41">
    <location>
        <begin position="868"/>
        <end position="897"/>
    </location>
</feature>
<feature type="sequence variant" id="VAR_075824" description="In SCKL2; dbSNP:rs373804633." evidence="22">
    <original>R</original>
    <variation>W</variation>
    <location>
        <position position="100"/>
    </location>
</feature>
<feature type="sequence variant" id="VAR_051308" description="In dbSNP:rs34678569.">
    <original>K</original>
    <variation>N</variation>
    <location>
        <position position="357"/>
    </location>
</feature>
<feature type="sequence variant" id="VAR_028308" description="In dbSNP:rs1804732.">
    <original>H</original>
    <variation>Y</variation>
    <location>
        <position position="387"/>
    </location>
</feature>
<feature type="mutagenesis site" description="Can form homodimers but not homotetramers. Abolishes ability to promote homologous recombination and DNA resection. Defective binding to DNA. Defective in localizing to sites of DNA damage. Does not affect interaction with MRN complex components MRE11, NBN or RAD50." evidence="24 33">
    <original>L</original>
    <variation>E</variation>
    <location>
        <position position="27"/>
    </location>
</feature>
<feature type="mutagenesis site" description="No effect on RPA focus formation on DNA damage." evidence="15">
    <original>H</original>
    <variation>A</variation>
    <location>
        <position position="31"/>
    </location>
</feature>
<feature type="mutagenesis site" description="No effect on RPA focus formation on DNA damage." evidence="15">
    <original>V</original>
    <variation>A</variation>
    <location>
        <position position="35"/>
    </location>
</feature>
<feature type="mutagenesis site" description="No effect on RPA focus formation on DNA damage." evidence="15">
    <original>K</original>
    <variation>A</variation>
    <location>
        <position position="41"/>
    </location>
</feature>
<feature type="mutagenesis site" description="No effect on RPA focus formation on DNA damage." evidence="15">
    <original>L</original>
    <variation>A</variation>
    <location>
        <position position="45"/>
    </location>
</feature>
<feature type="mutagenesis site" description="In K12R; defects in ability to promoting DNA resection and homologous recombination; when associated with R-78; R-115; R-132; R-133; R-404; R-572; R-578; R-640; R-759; R-760 and R-782. In K5R; defects in ability to promoting DNA resection and homologous recombination; when associated with R-78; R-115; R-132 and R-133." evidence="25">
    <original>K</original>
    <variation>R</variation>
    <location>
        <position position="62"/>
    </location>
</feature>
<feature type="mutagenesis site" description="In K12R; defects in ability to promoting DNA resection and homologous recombination; when associated with R-62; R-115; R-132; R-133; R-404; R-572; R-578; R-640; R-759; R-760 and R-782. In K5R; defects in ability to promoting DNA resection and homologous recombination; when associated with R-62; R-115; R-132 and R-133." evidence="25">
    <original>K</original>
    <variation>R</variation>
    <location>
        <position position="78"/>
    </location>
</feature>
<feature type="mutagenesis site" description="Reduces Zn(2+) content; when associated with A-92." evidence="24">
    <original>C</original>
    <variation>A</variation>
    <location>
        <position position="89"/>
    </location>
</feature>
<feature type="mutagenesis site" description="Reduces Zn(2+) content; when associated with A-89." evidence="24">
    <original>C</original>
    <variation>A</variation>
    <location>
        <position position="92"/>
    </location>
</feature>
<feature type="mutagenesis site" description="In K12R; defects in ability to promoting DNA resection and homologous recombination; when associated with R-62; R-78; R-132; R-133; R-404; R-572; R-578; R-640; R-759; R-760 and R-782. In K5R; defects in ability to promoting DNA resection and homologous recombination; when associated with R-62; R-78; R-132 and R-133." evidence="25">
    <original>K</original>
    <variation>R</variation>
    <location>
        <position position="115"/>
    </location>
</feature>
<feature type="mutagenesis site" description="In K12R; defects in ability to promoting DNA resection and homologous recombination; when associated with R-62; R-78; R-115; R-133; R-404; R-572; R-578; R-640; R-759; R-760 and R-782. In K5R; defects in ability to promoting DNA resection and homologous recombination; when associated with R-62; R-78; R-115 and R-133." evidence="25">
    <original>K</original>
    <variation>R</variation>
    <location>
        <position position="132"/>
    </location>
</feature>
<feature type="mutagenesis site" description="In K12R; defects in ability to promoting DNA resection and homologous recombination; when associated with R-62; R-78; R-115; R-133; R-404; R-572; R-578; R-640; R-759; R-760 and R-782. In K5R; defects in ability to promoting DNA resection and homologous recombination; when associated with R-62; R-78; R-115 and R-132." evidence="25">
    <original>K</original>
    <variation>R</variation>
    <location>
        <position position="133"/>
    </location>
</feature>
<feature type="mutagenesis site" description="No effect on FZR1-binding." evidence="23">
    <original>K</original>
    <variation>A</variation>
    <location>
        <position position="179"/>
    </location>
</feature>
<feature type="mutagenesis site" description="No effect on PIN1-binding. Impaired PIN1-binding, partially decreased CUL3/KLHL15-mediated proteasomal degradation, no effect on BRCA1-, MRE11-, nor on KLHL15-binding; when associated with A-315." evidence="21 28">
    <original>S</original>
    <variation>A</variation>
    <location>
        <position position="276"/>
    </location>
</feature>
<feature type="mutagenesis site" description="Decreased PIN1-binding. Impaired PIN1-binding, partially decreased CUL3/KLHL15-mediated proteasomal degradation, no effect on BRCA1-, MRE11-, nor on KLHL15-binding; when associated with A-276." evidence="21 28">
    <original>T</original>
    <variation>A</variation>
    <location>
        <position position="315"/>
    </location>
</feature>
<feature type="mutagenesis site" description="Abolishes BRCA1 interaction and ubiquitination. No activation of CHEK1 after DNA damage." evidence="8 11">
    <original>S</original>
    <variation>A</variation>
    <location>
        <position position="327"/>
    </location>
</feature>
<feature type="mutagenesis site" description="In K12R; defects in ability to promoting DNA resection and homologous recombination; when associated with R-62; R-78; R-115; R-132; R-133; R-572; R-578; R-640; R-759; R-760 and R-782." evidence="25">
    <original>K</original>
    <variation>R</variation>
    <location>
        <position position="404"/>
    </location>
</feature>
<feature type="mutagenesis site" description="Impaired FZR1-binding and APC/C-mediated polyubiquitination. Increased stability. No effect on MRE11-binding, nor on CUL3/KLHL15-mediated proteasomal degradation. No effect on DNA-en resection activity." evidence="23 28">
    <original>K</original>
    <variation>A</variation>
    <location>
        <position position="467"/>
    </location>
</feature>
<feature type="mutagenesis site" description="Abolishes damage recruitment capability." evidence="16">
    <original>K</original>
    <variation>A</variation>
    <location>
        <position position="513"/>
    </location>
</feature>
<feature type="mutagenesis site" description="Abolishes damage recruitment capability." evidence="16">
    <original>K</original>
    <variation>A</variation>
    <location>
        <position position="515"/>
    </location>
</feature>
<feature type="mutagenesis site" description="In K12R; defects in ability to promoting DNA resection and homologous recombination; when associated with R-62; R-78; R-115; R-132; R-133; R-404; R-578; R-640; R-759; R-760 and R-782." evidence="25">
    <original>K</original>
    <variation>R</variation>
    <location>
        <position position="572"/>
    </location>
</feature>
<feature type="mutagenesis site" description="In K12R; defects in ability to promoting DNA resection and homologous recombination; when associated with R-62; R-78; R-115; R-132; R-133; R-404; R-572; R-640; R-759; R-760 and R-782." evidence="25">
    <original>K</original>
    <variation>R</variation>
    <location>
        <position position="578"/>
    </location>
</feature>
<feature type="mutagenesis site" description="In K12R; defects in ability to promoting DNA resection and homologous recombination; when associated with R-62; R-78; R-115; R-132; R-133; R-404; R-572; R-578; R-759; R-760 and R-782." evidence="25">
    <original>K</original>
    <variation>R</variation>
    <location>
        <position position="640"/>
    </location>
</feature>
<feature type="mutagenesis site" description="Abrogates dissociation of BRCA1." evidence="4">
    <original>S</original>
    <variation>A</variation>
    <location>
        <position position="664"/>
    </location>
</feature>
<feature type="mutagenesis site" description="Abrogates dissociation of BRCA1." evidence="4">
    <original>S</original>
    <variation>A</variation>
    <location>
        <position position="745"/>
    </location>
</feature>
<feature type="mutagenesis site" description="In K12R; defects in ability to promoting DNA resection and homologous recombination; when associated with R-62; R-78; R-115; R-132; R-133; R-404; R-572; R-578; R-640; R-760 and R-782." evidence="25">
    <original>K</original>
    <variation>R</variation>
    <location>
        <position position="759"/>
    </location>
</feature>
<feature type="mutagenesis site" description="In K12R; defects in ability to promoting DNA resection and homologous recombination; when associated with R-62; R-78; R-115; R-132; R-133; R-404; R-572; R-578; R-640; R-759 and R-782." evidence="25">
    <original>K</original>
    <variation>R</variation>
    <location>
        <position position="760"/>
    </location>
</feature>
<feature type="mutagenesis site" description="In K12R; defects in ability to promoting DNA resection and homologous recombination; when associated with R-62; R-78; R-115; R-132; R-133; R-404; R-572; R-578; R-640; R-759 and R-760." evidence="25">
    <original>K</original>
    <variation>R</variation>
    <location>
        <position position="782"/>
    </location>
</feature>
<feature type="mutagenesis site" description="Defective binding to DNA. No effect on CUL3/KLHL15-mediated proteasomal degradation. Does not affect tetramerization." evidence="28 33">
    <original>R</original>
    <variation>A</variation>
    <location>
        <position position="839"/>
    </location>
</feature>
<feature type="mutagenesis site" description="Decreased CUL3/KLHL15-mediated proteasomal degradation." evidence="28">
    <original>F</original>
    <variation>A</variation>
    <location>
        <position position="840"/>
    </location>
</feature>
<feature type="mutagenesis site" description="Decreased interaction with KLHL15, decreased polyubiquitination and CUL3/KLHL15-mediated proteasomal degradation. No effect on DNA-end resection activity." evidence="28 37">
    <original>Y</original>
    <variation>A</variation>
    <location>
        <position position="842"/>
    </location>
</feature>
<feature type="mutagenesis site" description="No effect on KLHL15-binding, nor on CUL3/KLHL15-mediated proteasomal degradation." evidence="28">
    <original>Y</original>
    <variation>F</variation>
    <location>
        <position position="842"/>
    </location>
</feature>
<feature type="mutagenesis site" description="Impairs DNA resection. Impaired ability to promote the endonuclease activity of MRE11. Impaired ability to promote the endonuclease activity of MRE11; when associated with A-859." evidence="14 29 30">
    <original>T</original>
    <variation>A</variation>
    <location>
        <position position="847"/>
    </location>
</feature>
<feature type="mutagenesis site" description="Mimics constitutive phosphorylation. Increased ability to promote the endonuclease activity of MRE11; when associated with E-859." evidence="14 29">
    <original>T</original>
    <variation>E</variation>
    <location>
        <position position="847"/>
    </location>
</feature>
<feature type="mutagenesis site" description="Decreased phosphorylation by ATR. Impaired ability to promote the endonuclease activity of MRE11; when associated with A-847." evidence="19 29">
    <original>T</original>
    <variation>A</variation>
    <location>
        <position position="859"/>
    </location>
</feature>
<feature type="mutagenesis site" description="Mimics constitutive phosphorylation. Increased ability to promote the endonuclease activity of MRE11; when associated with E-847." evidence="29">
    <original>T</original>
    <variation>E</variation>
    <location>
        <position position="859"/>
    </location>
</feature>
<feature type="sequence conflict" description="In Ref. 1; AAC14371." evidence="42" ref="1">
    <original>S</original>
    <variation>L</variation>
    <location>
        <position position="4"/>
    </location>
</feature>
<feature type="sequence conflict" description="In Ref. 4; BX648221." evidence="42" ref="4">
    <original>H</original>
    <variation>Q</variation>
    <location>
        <position position="74"/>
    </location>
</feature>
<feature type="sequence conflict" description="In Ref. 3; BAF85170." evidence="42" ref="3">
    <original>C</original>
    <variation>Y</variation>
    <location>
        <position position="92"/>
    </location>
</feature>
<feature type="sequence conflict" description="In Ref. 3; BAF85170." evidence="42" ref="3">
    <original>E</original>
    <variation>G</variation>
    <location>
        <position position="123"/>
    </location>
</feature>
<feature type="sequence conflict" description="In Ref. 4; BX648221." evidence="42" ref="4">
    <original>D</original>
    <variation>G</variation>
    <location>
        <position position="341"/>
    </location>
</feature>
<feature type="sequence conflict" description="In Ref. 4; BX648221." evidence="42" ref="4">
    <original>K</original>
    <variation>R</variation>
    <location>
        <position position="515"/>
    </location>
</feature>
<feature type="sequence conflict" description="In Ref. 3; BAF85170." evidence="42" ref="3">
    <original>L</original>
    <variation>P</variation>
    <location>
        <position position="521"/>
    </location>
</feature>
<feature type="sequence conflict" description="In Ref. 4; BX648221." evidence="42" ref="4">
    <original>L</original>
    <variation>P</variation>
    <location>
        <position position="642"/>
    </location>
</feature>
<feature type="helix" evidence="53">
    <location>
        <begin position="18"/>
        <end position="50"/>
    </location>
</feature>
<feature type="sequence conflict" description="In Ref. 4; BX648221." evidence="42" ref="4">
    <original>S</original>
    <variation>G</variation>
    <location sequence="Q99708-3">
        <position position="862"/>
    </location>
</feature>
<gene>
    <name type="primary">RBBP8</name>
    <name type="synonym">CTIP</name>
</gene>
<keyword id="KW-0002">3D-structure</keyword>
<keyword id="KW-0025">Alternative splicing</keyword>
<keyword id="KW-0131">Cell cycle</keyword>
<keyword id="KW-0132">Cell division</keyword>
<keyword id="KW-0158">Chromosome</keyword>
<keyword id="KW-0175">Coiled coil</keyword>
<keyword id="KW-0225">Disease variant</keyword>
<keyword id="KW-0227">DNA damage</keyword>
<keyword id="KW-0234">DNA repair</keyword>
<keyword id="KW-0238">DNA-binding</keyword>
<keyword id="KW-0242">Dwarfism</keyword>
<keyword id="KW-0255">Endonuclease</keyword>
<keyword id="KW-0378">Hydrolase</keyword>
<keyword id="KW-0991">Intellectual disability</keyword>
<keyword id="KW-1017">Isopeptide bond</keyword>
<keyword id="KW-0469">Meiosis</keyword>
<keyword id="KW-0479">Metal-binding</keyword>
<keyword id="KW-0498">Mitosis</keyword>
<keyword id="KW-0540">Nuclease</keyword>
<keyword id="KW-0539">Nucleus</keyword>
<keyword id="KW-0597">Phosphoprotein</keyword>
<keyword id="KW-1267">Proteomics identification</keyword>
<keyword id="KW-1185">Reference proteome</keyword>
<keyword id="KW-0832">Ubl conjugation</keyword>
<keyword id="KW-0862">Zinc</keyword>
<organism>
    <name type="scientific">Homo sapiens</name>
    <name type="common">Human</name>
    <dbReference type="NCBI Taxonomy" id="9606"/>
    <lineage>
        <taxon>Eukaryota</taxon>
        <taxon>Metazoa</taxon>
        <taxon>Chordata</taxon>
        <taxon>Craniata</taxon>
        <taxon>Vertebrata</taxon>
        <taxon>Euteleostomi</taxon>
        <taxon>Mammalia</taxon>
        <taxon>Eutheria</taxon>
        <taxon>Euarchontoglires</taxon>
        <taxon>Primates</taxon>
        <taxon>Haplorrhini</taxon>
        <taxon>Catarrhini</taxon>
        <taxon>Hominidae</taxon>
        <taxon>Homo</taxon>
    </lineage>
</organism>
<proteinExistence type="evidence at protein level"/>
<accession>Q99708</accession>
<accession>A6NKN2</accession>
<accession>A8K8W6</accession>
<accession>E7ETY1</accession>
<accession>O75371</accession>
<accession>Q8NHQ3</accession>
<dbReference type="EC" id="3.1.-.-" evidence="14"/>
<dbReference type="EMBL" id="AF043431">
    <property type="protein sequence ID" value="AAC34368.1"/>
    <property type="molecule type" value="mRNA"/>
</dbReference>
<dbReference type="EMBL" id="U72066">
    <property type="protein sequence ID" value="AAC14371.1"/>
    <property type="molecule type" value="mRNA"/>
</dbReference>
<dbReference type="EMBL" id="AK292481">
    <property type="protein sequence ID" value="BAF85170.1"/>
    <property type="molecule type" value="mRNA"/>
</dbReference>
<dbReference type="EMBL" id="BX648221">
    <property type="status" value="NOT_ANNOTATED_CDS"/>
    <property type="molecule type" value="mRNA"/>
</dbReference>
<dbReference type="EMBL" id="AC091147">
    <property type="status" value="NOT_ANNOTATED_CDS"/>
    <property type="molecule type" value="Genomic_DNA"/>
</dbReference>
<dbReference type="EMBL" id="AC106033">
    <property type="status" value="NOT_ANNOTATED_CDS"/>
    <property type="molecule type" value="Genomic_DNA"/>
</dbReference>
<dbReference type="EMBL" id="CH471088">
    <property type="protein sequence ID" value="EAX01144.1"/>
    <property type="molecule type" value="Genomic_DNA"/>
</dbReference>
<dbReference type="EMBL" id="BC030590">
    <property type="protein sequence ID" value="AAH30590.1"/>
    <property type="molecule type" value="mRNA"/>
</dbReference>
<dbReference type="CCDS" id="CCDS11874.1">
    <molecule id="Q99708-3"/>
</dbReference>
<dbReference type="CCDS" id="CCDS11875.1">
    <molecule id="Q99708-1"/>
</dbReference>
<dbReference type="RefSeq" id="NP_002885.1">
    <molecule id="Q99708-1"/>
    <property type="nucleotide sequence ID" value="NM_002894.3"/>
</dbReference>
<dbReference type="RefSeq" id="NP_976036.1">
    <molecule id="Q99708-1"/>
    <property type="nucleotide sequence ID" value="NM_203291.2"/>
</dbReference>
<dbReference type="RefSeq" id="NP_976037.1">
    <molecule id="Q99708-3"/>
    <property type="nucleotide sequence ID" value="NM_203292.2"/>
</dbReference>
<dbReference type="RefSeq" id="XP_006722582.1">
    <molecule id="Q99708-1"/>
    <property type="nucleotide sequence ID" value="XM_006722519.3"/>
</dbReference>
<dbReference type="RefSeq" id="XP_006722583.1">
    <molecule id="Q99708-1"/>
    <property type="nucleotide sequence ID" value="XM_006722520.3"/>
</dbReference>
<dbReference type="RefSeq" id="XP_006722584.1">
    <molecule id="Q99708-1"/>
    <property type="nucleotide sequence ID" value="XM_006722521.3"/>
</dbReference>
<dbReference type="RefSeq" id="XP_011524434.1">
    <molecule id="Q99708-1"/>
    <property type="nucleotide sequence ID" value="XM_011526132.3"/>
</dbReference>
<dbReference type="RefSeq" id="XP_047293683.1">
    <molecule id="Q99708-1"/>
    <property type="nucleotide sequence ID" value="XM_047437727.1"/>
</dbReference>
<dbReference type="RefSeq" id="XP_047293684.1">
    <molecule id="Q99708-1"/>
    <property type="nucleotide sequence ID" value="XM_047437728.1"/>
</dbReference>
<dbReference type="RefSeq" id="XP_054174931.1">
    <molecule id="Q99708-1"/>
    <property type="nucleotide sequence ID" value="XM_054318956.1"/>
</dbReference>
<dbReference type="RefSeq" id="XP_054174932.1">
    <molecule id="Q99708-1"/>
    <property type="nucleotide sequence ID" value="XM_054318957.1"/>
</dbReference>
<dbReference type="RefSeq" id="XP_054174933.1">
    <molecule id="Q99708-1"/>
    <property type="nucleotide sequence ID" value="XM_054318958.1"/>
</dbReference>
<dbReference type="RefSeq" id="XP_054174934.1">
    <molecule id="Q99708-1"/>
    <property type="nucleotide sequence ID" value="XM_054318959.1"/>
</dbReference>
<dbReference type="RefSeq" id="XP_054174935.1">
    <molecule id="Q99708-1"/>
    <property type="nucleotide sequence ID" value="XM_054318960.1"/>
</dbReference>
<dbReference type="PDB" id="1Y98">
    <property type="method" value="X-ray"/>
    <property type="resolution" value="2.50 A"/>
    <property type="chains" value="B=322-333"/>
</dbReference>
<dbReference type="PDB" id="2L4Z">
    <property type="method" value="NMR"/>
    <property type="chains" value="A=641-685"/>
</dbReference>
<dbReference type="PDB" id="4D2H">
    <property type="method" value="X-ray"/>
    <property type="resolution" value="1.90 A"/>
    <property type="chains" value="A/B/C/D/E/F/G/H=18-52"/>
</dbReference>
<dbReference type="PDB" id="7BGF">
    <property type="method" value="X-ray"/>
    <property type="resolution" value="2.80 A"/>
    <property type="chains" value="A/B=31-152"/>
</dbReference>
<dbReference type="PDBsum" id="1Y98"/>
<dbReference type="PDBsum" id="2L4Z"/>
<dbReference type="PDBsum" id="4D2H"/>
<dbReference type="PDBsum" id="7BGF"/>
<dbReference type="SMR" id="Q99708"/>
<dbReference type="BioGRID" id="111867">
    <property type="interactions" value="129"/>
</dbReference>
<dbReference type="ComplexPortal" id="CPX-4441">
    <property type="entry name" value="BRCA1-C complex"/>
</dbReference>
<dbReference type="CORUM" id="Q99708"/>
<dbReference type="DIP" id="DIP-24244N"/>
<dbReference type="ELM" id="Q99708"/>
<dbReference type="FunCoup" id="Q99708">
    <property type="interactions" value="2025"/>
</dbReference>
<dbReference type="IntAct" id="Q99708">
    <property type="interactions" value="51"/>
</dbReference>
<dbReference type="MINT" id="Q99708"/>
<dbReference type="STRING" id="9606.ENSP00000382628"/>
<dbReference type="GlyGen" id="Q99708">
    <property type="glycosylation" value="1 site, 1 O-linked glycan (1 site)"/>
</dbReference>
<dbReference type="iPTMnet" id="Q99708"/>
<dbReference type="PhosphoSitePlus" id="Q99708"/>
<dbReference type="BioMuta" id="RBBP8"/>
<dbReference type="DMDM" id="116242745"/>
<dbReference type="jPOST" id="Q99708"/>
<dbReference type="MassIVE" id="Q99708"/>
<dbReference type="PaxDb" id="9606-ENSP00000382628"/>
<dbReference type="PeptideAtlas" id="Q99708"/>
<dbReference type="ProteomicsDB" id="1422"/>
<dbReference type="ProteomicsDB" id="78424">
    <molecule id="Q99708-1"/>
</dbReference>
<dbReference type="ProteomicsDB" id="78425">
    <molecule id="Q99708-2"/>
</dbReference>
<dbReference type="Antibodypedia" id="7316">
    <property type="antibodies" value="452 antibodies from 42 providers"/>
</dbReference>
<dbReference type="DNASU" id="5932"/>
<dbReference type="Ensembl" id="ENST00000327155.10">
    <molecule id="Q99708-1"/>
    <property type="protein sequence ID" value="ENSP00000323050.5"/>
    <property type="gene ID" value="ENSG00000101773.19"/>
</dbReference>
<dbReference type="Ensembl" id="ENST00000399722.6">
    <molecule id="Q99708-1"/>
    <property type="protein sequence ID" value="ENSP00000382628.2"/>
    <property type="gene ID" value="ENSG00000101773.19"/>
</dbReference>
<dbReference type="Ensembl" id="ENST00000399725.6">
    <molecule id="Q99708-3"/>
    <property type="protein sequence ID" value="ENSP00000382630.2"/>
    <property type="gene ID" value="ENSG00000101773.19"/>
</dbReference>
<dbReference type="GeneID" id="5932"/>
<dbReference type="KEGG" id="hsa:5932"/>
<dbReference type="MANE-Select" id="ENST00000327155.10">
    <property type="protein sequence ID" value="ENSP00000323050.5"/>
    <property type="RefSeq nucleotide sequence ID" value="NM_002894.3"/>
    <property type="RefSeq protein sequence ID" value="NP_002885.1"/>
</dbReference>
<dbReference type="UCSC" id="uc002ktw.4">
    <molecule id="Q99708-1"/>
    <property type="organism name" value="human"/>
</dbReference>
<dbReference type="AGR" id="HGNC:9891"/>
<dbReference type="CTD" id="5932"/>
<dbReference type="DisGeNET" id="5932"/>
<dbReference type="GeneCards" id="RBBP8"/>
<dbReference type="HGNC" id="HGNC:9891">
    <property type="gene designation" value="RBBP8"/>
</dbReference>
<dbReference type="HPA" id="ENSG00000101773">
    <property type="expression patterns" value="Low tissue specificity"/>
</dbReference>
<dbReference type="MalaCards" id="RBBP8"/>
<dbReference type="MIM" id="251255">
    <property type="type" value="phenotype"/>
</dbReference>
<dbReference type="MIM" id="604124">
    <property type="type" value="gene"/>
</dbReference>
<dbReference type="MIM" id="606744">
    <property type="type" value="phenotype"/>
</dbReference>
<dbReference type="neXtProt" id="NX_Q99708"/>
<dbReference type="OpenTargets" id="ENSG00000101773"/>
<dbReference type="Orphanet" id="313795">
    <property type="disease" value="Jawad syndrome"/>
</dbReference>
<dbReference type="Orphanet" id="808">
    <property type="disease" value="Seckel syndrome"/>
</dbReference>
<dbReference type="PharmGKB" id="PA34255"/>
<dbReference type="VEuPathDB" id="HostDB:ENSG00000101773"/>
<dbReference type="eggNOG" id="ENOG502QTV5">
    <property type="taxonomic scope" value="Eukaryota"/>
</dbReference>
<dbReference type="GeneTree" id="ENSGT00530000063835"/>
<dbReference type="HOGENOM" id="CLU_019262_0_0_1"/>
<dbReference type="InParanoid" id="Q99708"/>
<dbReference type="OMA" id="LENFQWS"/>
<dbReference type="OrthoDB" id="5801062at2759"/>
<dbReference type="PAN-GO" id="Q99708">
    <property type="GO annotations" value="9 GO annotations based on evolutionary models"/>
</dbReference>
<dbReference type="PhylomeDB" id="Q99708"/>
<dbReference type="TreeFam" id="TF106469"/>
<dbReference type="PathwayCommons" id="Q99708"/>
<dbReference type="Reactome" id="R-HSA-5685938">
    <property type="pathway name" value="HDR through Single Strand Annealing (SSA)"/>
</dbReference>
<dbReference type="Reactome" id="R-HSA-5685939">
    <property type="pathway name" value="HDR through MMEJ (alt-NHEJ)"/>
</dbReference>
<dbReference type="Reactome" id="R-HSA-5685942">
    <property type="pathway name" value="HDR through Homologous Recombination (HRR)"/>
</dbReference>
<dbReference type="Reactome" id="R-HSA-5693554">
    <property type="pathway name" value="Resolution of D-loop Structures through Synthesis-Dependent Strand Annealing (SDSA)"/>
</dbReference>
<dbReference type="Reactome" id="R-HSA-5693568">
    <property type="pathway name" value="Resolution of D-loop Structures through Holliday Junction Intermediates"/>
</dbReference>
<dbReference type="Reactome" id="R-HSA-5693579">
    <property type="pathway name" value="Homologous DNA Pairing and Strand Exchange"/>
</dbReference>
<dbReference type="Reactome" id="R-HSA-5693607">
    <property type="pathway name" value="Processing of DNA double-strand break ends"/>
</dbReference>
<dbReference type="Reactome" id="R-HSA-5693616">
    <property type="pathway name" value="Presynaptic phase of homologous DNA pairing and strand exchange"/>
</dbReference>
<dbReference type="Reactome" id="R-HSA-6804756">
    <property type="pathway name" value="Regulation of TP53 Activity through Phosphorylation"/>
</dbReference>
<dbReference type="Reactome" id="R-HSA-69473">
    <property type="pathway name" value="G2/M DNA damage checkpoint"/>
</dbReference>
<dbReference type="Reactome" id="R-HSA-8953750">
    <property type="pathway name" value="Transcriptional Regulation by E2F6"/>
</dbReference>
<dbReference type="Reactome" id="R-HSA-912446">
    <property type="pathway name" value="Meiotic recombination"/>
</dbReference>
<dbReference type="Reactome" id="R-HSA-9701192">
    <property type="pathway name" value="Defective homologous recombination repair (HRR) due to BRCA1 loss of function"/>
</dbReference>
<dbReference type="Reactome" id="R-HSA-9704331">
    <property type="pathway name" value="Defective HDR through Homologous Recombination Repair (HRR) due to PALB2 loss of BRCA1 binding function"/>
</dbReference>
<dbReference type="Reactome" id="R-HSA-9704646">
    <property type="pathway name" value="Defective HDR through Homologous Recombination Repair (HRR) due to PALB2 loss of BRCA2/RAD51/RAD51C binding function"/>
</dbReference>
<dbReference type="Reactome" id="R-HSA-9709570">
    <property type="pathway name" value="Impaired BRCA2 binding to RAD51"/>
</dbReference>
<dbReference type="Reactome" id="R-HSA-9709603">
    <property type="pathway name" value="Impaired BRCA2 binding to PALB2"/>
</dbReference>
<dbReference type="SignaLink" id="Q99708"/>
<dbReference type="SIGNOR" id="Q99708"/>
<dbReference type="BioGRID-ORCS" id="5932">
    <property type="hits" value="681 hits in 1168 CRISPR screens"/>
</dbReference>
<dbReference type="ChiTaRS" id="RBBP8">
    <property type="organism name" value="human"/>
</dbReference>
<dbReference type="EvolutionaryTrace" id="Q99708"/>
<dbReference type="GeneWiki" id="RBBP8"/>
<dbReference type="GenomeRNAi" id="5932"/>
<dbReference type="Pharos" id="Q99708">
    <property type="development level" value="Tbio"/>
</dbReference>
<dbReference type="PRO" id="PR:Q99708"/>
<dbReference type="Proteomes" id="UP000005640">
    <property type="component" value="Chromosome 18"/>
</dbReference>
<dbReference type="RNAct" id="Q99708">
    <property type="molecule type" value="protein"/>
</dbReference>
<dbReference type="Bgee" id="ENSG00000101773">
    <property type="expression patterns" value="Expressed in choroid plexus epithelium and 183 other cell types or tissues"/>
</dbReference>
<dbReference type="ExpressionAtlas" id="Q99708">
    <property type="expression patterns" value="baseline and differential"/>
</dbReference>
<dbReference type="GO" id="GO:0070533">
    <property type="term" value="C:BRCA1-C complex"/>
    <property type="evidence" value="ECO:0000353"/>
    <property type="project" value="ComplexPortal"/>
</dbReference>
<dbReference type="GO" id="GO:0043231">
    <property type="term" value="C:intracellular membrane-bounded organelle"/>
    <property type="evidence" value="ECO:0000314"/>
    <property type="project" value="HPA"/>
</dbReference>
<dbReference type="GO" id="GO:0005654">
    <property type="term" value="C:nucleoplasm"/>
    <property type="evidence" value="ECO:0000314"/>
    <property type="project" value="HPA"/>
</dbReference>
<dbReference type="GO" id="GO:0005634">
    <property type="term" value="C:nucleus"/>
    <property type="evidence" value="ECO:0000304"/>
    <property type="project" value="ProtInc"/>
</dbReference>
<dbReference type="GO" id="GO:0035861">
    <property type="term" value="C:site of double-strand break"/>
    <property type="evidence" value="ECO:0000314"/>
    <property type="project" value="UniProtKB"/>
</dbReference>
<dbReference type="GO" id="GO:0017053">
    <property type="term" value="C:transcription repressor complex"/>
    <property type="evidence" value="ECO:0000314"/>
    <property type="project" value="BHF-UCL"/>
</dbReference>
<dbReference type="GO" id="GO:0003684">
    <property type="term" value="F:damaged DNA binding"/>
    <property type="evidence" value="ECO:0000314"/>
    <property type="project" value="UniProtKB"/>
</dbReference>
<dbReference type="GO" id="GO:0042802">
    <property type="term" value="F:identical protein binding"/>
    <property type="evidence" value="ECO:0000353"/>
    <property type="project" value="IntAct"/>
</dbReference>
<dbReference type="GO" id="GO:0046872">
    <property type="term" value="F:metal ion binding"/>
    <property type="evidence" value="ECO:0007669"/>
    <property type="project" value="UniProtKB-KW"/>
</dbReference>
<dbReference type="GO" id="GO:0061629">
    <property type="term" value="F:RNA polymerase II-specific DNA-binding transcription factor binding"/>
    <property type="evidence" value="ECO:0000353"/>
    <property type="project" value="BHF-UCL"/>
</dbReference>
<dbReference type="GO" id="GO:0000014">
    <property type="term" value="F:single-stranded DNA endodeoxyribonuclease activity"/>
    <property type="evidence" value="ECO:0000315"/>
    <property type="project" value="UniProtKB"/>
</dbReference>
<dbReference type="GO" id="GO:0003714">
    <property type="term" value="F:transcription corepressor activity"/>
    <property type="evidence" value="ECO:0000314"/>
    <property type="project" value="BHF-UCL"/>
</dbReference>
<dbReference type="GO" id="GO:0001835">
    <property type="term" value="P:blastocyst hatching"/>
    <property type="evidence" value="ECO:0007669"/>
    <property type="project" value="Ensembl"/>
</dbReference>
<dbReference type="GO" id="GO:0051301">
    <property type="term" value="P:cell division"/>
    <property type="evidence" value="ECO:0007669"/>
    <property type="project" value="UniProtKB-KW"/>
</dbReference>
<dbReference type="GO" id="GO:0010792">
    <property type="term" value="P:DNA double-strand break processing involved in repair via single-strand annealing"/>
    <property type="evidence" value="ECO:0000315"/>
    <property type="project" value="UniProtKB"/>
</dbReference>
<dbReference type="GO" id="GO:0006281">
    <property type="term" value="P:DNA repair"/>
    <property type="evidence" value="ECO:0000304"/>
    <property type="project" value="ProtInc"/>
</dbReference>
<dbReference type="GO" id="GO:0110025">
    <property type="term" value="P:DNA strand resection involved in replication fork processing"/>
    <property type="evidence" value="ECO:0000314"/>
    <property type="project" value="UniProtKB"/>
</dbReference>
<dbReference type="GO" id="GO:0000724">
    <property type="term" value="P:double-strand break repair via homologous recombination"/>
    <property type="evidence" value="ECO:0000314"/>
    <property type="project" value="UniProtKB"/>
</dbReference>
<dbReference type="GO" id="GO:0000082">
    <property type="term" value="P:G1/S transition of mitotic cell cycle"/>
    <property type="evidence" value="ECO:0007669"/>
    <property type="project" value="Ensembl"/>
</dbReference>
<dbReference type="GO" id="GO:0035825">
    <property type="term" value="P:homologous recombination"/>
    <property type="evidence" value="ECO:0000303"/>
    <property type="project" value="ComplexPortal"/>
</dbReference>
<dbReference type="GO" id="GO:0051321">
    <property type="term" value="P:meiotic cell cycle"/>
    <property type="evidence" value="ECO:0007669"/>
    <property type="project" value="UniProtKB-KW"/>
</dbReference>
<dbReference type="GO" id="GO:0044818">
    <property type="term" value="P:mitotic G2/M transition checkpoint"/>
    <property type="evidence" value="ECO:0000303"/>
    <property type="project" value="ComplexPortal"/>
</dbReference>
<dbReference type="GO" id="GO:0006357">
    <property type="term" value="P:regulation of transcription by RNA polymerase II"/>
    <property type="evidence" value="ECO:0000304"/>
    <property type="project" value="ProtInc"/>
</dbReference>
<dbReference type="IDEAL" id="IID00340"/>
<dbReference type="InterPro" id="IPR019518">
    <property type="entry name" value="CtIP_N"/>
</dbReference>
<dbReference type="InterPro" id="IPR013882">
    <property type="entry name" value="Ctp1_C"/>
</dbReference>
<dbReference type="InterPro" id="IPR033316">
    <property type="entry name" value="RBBP8-like"/>
</dbReference>
<dbReference type="PANTHER" id="PTHR15107:SF4">
    <property type="entry name" value="DNA ENDONUCLEASE RBBP8"/>
    <property type="match status" value="1"/>
</dbReference>
<dbReference type="PANTHER" id="PTHR15107">
    <property type="entry name" value="RETINOBLASTOMA BINDING PROTEIN 8"/>
    <property type="match status" value="1"/>
</dbReference>
<dbReference type="Pfam" id="PF10482">
    <property type="entry name" value="CtIP_N"/>
    <property type="match status" value="1"/>
</dbReference>
<dbReference type="Pfam" id="PF08573">
    <property type="entry name" value="SAE2"/>
    <property type="match status" value="1"/>
</dbReference>
<sequence length="897" mass="101942">MNISGSSCGSPNSADTSSDFKDLWTKLKECHDREVQGLQVKVTKLKQERILDAQRLEEFFTKNQQLREQQKVLHETIKVLEDRLRAGLCDRCAVTEEHMRKKQQEFENIRQQNLKLITELMNERNTLQEENKKLSEQLQQKIENDQQHQAAELECEEDVIPDSPITAFSFSGVNRLRRKENPHVRYIEQTHTKLEHSVCANEMRKVSKSSTHPQHNPNENEILVADTYDQSQSPMAKAHGTSSYTPDKSSFNLATVVAETLGLGVQEESETQGPMSPLGDELYHCLEGNHKKQPFEESTRNTEDSLRFSDSTSKTPPQEELPTRVSSPVFGATSSIKSGLDLNTSLSPSLLQPGKKKHLKTLPFSNTCISRLEKTRSKSEDSALFTHHSLGSEVNKIIIQSSNKQILINKNISESLGEQNRTEYGKDSNTDKHLEPLKSLGGRTSKRKKTEEESEHEVSCPQASFDKENAFPFPMDNQFSMNGDCVMDKPLDLSDRFSAIQRQEKSQGSETSKNKFRQVTLYEALKTIPKGFSSSRKASDGNCTLPKDSPGEPCSQECIILQPLNKCSPDNKPSLQIKEENAVFKIPLRPRESLETENVLDDIKSAGSHEPIKIQTRSDHGGCELASVLQLNPCRTGKIKSLQNNQDVSFENIQWSIDPGADLSQYKMDVTVIDTKDGSQSKLGGETVDMDCTLVSETVLLKMKKQEQKGEKSSNEERKMNDSLEDMFDRTTHEEYESCLADSFSQAADEEEELSTATKKLHTHGDKQDKVKQKAFVEPYFKGDERETSLQNFPHIEVVRKKEERRKLLGHTCKECEIYYADMPAEEREKKLASCSRHRFRYIPPNTPENFWEVGFPSTQTCMERGYIKEDLDPCPRPKRRQPYNAIFSPKGKEQKT</sequence>
<protein>
    <recommendedName>
        <fullName>DNA endonuclease RBBP8</fullName>
        <ecNumber evidence="14">3.1.-.-</ecNumber>
    </recommendedName>
    <alternativeName>
        <fullName>CtBP-interacting protein</fullName>
        <shortName>CtIP</shortName>
    </alternativeName>
    <alternativeName>
        <fullName>Retinoblastoma-binding protein 8</fullName>
        <shortName>RBBP-8</shortName>
    </alternativeName>
    <alternativeName>
        <fullName>Retinoblastoma-interacting protein and myosin-like</fullName>
        <shortName>RIM</shortName>
    </alternativeName>
    <alternativeName>
        <fullName>Sporulation in the absence of SPO11 protein 2 homolog</fullName>
        <shortName>SAE2</shortName>
    </alternativeName>
</protein>
<evidence type="ECO:0000250" key="1">
    <source>
        <dbReference type="UniProtKB" id="Q80YR6"/>
    </source>
</evidence>
<evidence type="ECO:0000256" key="2">
    <source>
        <dbReference type="SAM" id="MobiDB-lite"/>
    </source>
</evidence>
<evidence type="ECO:0000269" key="3">
    <source>
    </source>
</evidence>
<evidence type="ECO:0000269" key="4">
    <source>
    </source>
</evidence>
<evidence type="ECO:0000269" key="5">
    <source>
    </source>
</evidence>
<evidence type="ECO:0000269" key="6">
    <source>
    </source>
</evidence>
<evidence type="ECO:0000269" key="7">
    <source>
    </source>
</evidence>
<evidence type="ECO:0000269" key="8">
    <source>
    </source>
</evidence>
<evidence type="ECO:0000269" key="9">
    <source>
    </source>
</evidence>
<evidence type="ECO:0000269" key="10">
    <source>
    </source>
</evidence>
<evidence type="ECO:0000269" key="11">
    <source>
    </source>
</evidence>
<evidence type="ECO:0000269" key="12">
    <source>
    </source>
</evidence>
<evidence type="ECO:0000269" key="13">
    <source>
    </source>
</evidence>
<evidence type="ECO:0000269" key="14">
    <source>
    </source>
</evidence>
<evidence type="ECO:0000269" key="15">
    <source>
    </source>
</evidence>
<evidence type="ECO:0000269" key="16">
    <source>
    </source>
</evidence>
<evidence type="ECO:0000269" key="17">
    <source>
    </source>
</evidence>
<evidence type="ECO:0000269" key="18">
    <source>
    </source>
</evidence>
<evidence type="ECO:0000269" key="19">
    <source>
    </source>
</evidence>
<evidence type="ECO:0000269" key="20">
    <source>
    </source>
</evidence>
<evidence type="ECO:0000269" key="21">
    <source>
    </source>
</evidence>
<evidence type="ECO:0000269" key="22">
    <source>
    </source>
</evidence>
<evidence type="ECO:0000269" key="23">
    <source>
    </source>
</evidence>
<evidence type="ECO:0000269" key="24">
    <source>
    </source>
</evidence>
<evidence type="ECO:0000269" key="25">
    <source>
    </source>
</evidence>
<evidence type="ECO:0000269" key="26">
    <source>
    </source>
</evidence>
<evidence type="ECO:0000269" key="27">
    <source>
    </source>
</evidence>
<evidence type="ECO:0000269" key="28">
    <source>
    </source>
</evidence>
<evidence type="ECO:0000269" key="29">
    <source>
    </source>
</evidence>
<evidence type="ECO:0000269" key="30">
    <source>
    </source>
</evidence>
<evidence type="ECO:0000269" key="31">
    <source>
    </source>
</evidence>
<evidence type="ECO:0000269" key="32">
    <source>
    </source>
</evidence>
<evidence type="ECO:0000269" key="33">
    <source>
    </source>
</evidence>
<evidence type="ECO:0000269" key="34">
    <source>
    </source>
</evidence>
<evidence type="ECO:0000269" key="35">
    <source>
    </source>
</evidence>
<evidence type="ECO:0000269" key="36">
    <source>
    </source>
</evidence>
<evidence type="ECO:0000269" key="37">
    <source>
    </source>
</evidence>
<evidence type="ECO:0000269" key="38">
    <source>
    </source>
</evidence>
<evidence type="ECO:0000269" key="39">
    <source>
    </source>
</evidence>
<evidence type="ECO:0000303" key="40">
    <source>
    </source>
</evidence>
<evidence type="ECO:0000303" key="41">
    <source>
    </source>
</evidence>
<evidence type="ECO:0000305" key="42"/>
<evidence type="ECO:0000305" key="43">
    <source>
    </source>
</evidence>
<evidence type="ECO:0000305" key="44">
    <source>
    </source>
</evidence>
<evidence type="ECO:0007744" key="45">
    <source>
        <dbReference type="PDB" id="2L4Z"/>
    </source>
</evidence>
<evidence type="ECO:0007744" key="46">
    <source>
        <dbReference type="PDB" id="4D2H"/>
    </source>
</evidence>
<evidence type="ECO:0007744" key="47">
    <source>
        <dbReference type="PDB" id="7BGF"/>
    </source>
</evidence>
<evidence type="ECO:0007744" key="48">
    <source>
    </source>
</evidence>
<evidence type="ECO:0007744" key="49">
    <source>
    </source>
</evidence>
<evidence type="ECO:0007744" key="50">
    <source>
    </source>
</evidence>
<evidence type="ECO:0007744" key="51">
    <source>
    </source>
</evidence>
<evidence type="ECO:0007744" key="52">
    <source>
    </source>
</evidence>
<evidence type="ECO:0007829" key="53">
    <source>
        <dbReference type="PDB" id="4D2H"/>
    </source>
</evidence>
<name>CTIP_HUMAN</name>
<reference key="1">
    <citation type="journal article" date="1998" name="Genomics">
        <title>Molecular cloning and characterization of a novel retinoblastoma-binding protein.</title>
        <authorList>
            <person name="Fusco C."/>
            <person name="Reymond A."/>
            <person name="Zervos A.S."/>
        </authorList>
    </citation>
    <scope>NUCLEOTIDE SEQUENCE [MRNA] (ISOFORM 1)</scope>
    <scope>INTERACTION WITH RB1</scope>
</reference>
<reference key="2">
    <citation type="journal article" date="1998" name="J. Biol. Chem.">
        <title>Interaction between a cellular protein that binds to the C-terminal region of adenovirus E1A (CtBP) and a novel cellular protein is disrupted by E1A through a conserved PLDLS motif.</title>
        <authorList>
            <person name="Schaeper U."/>
            <person name="Subramanian T."/>
            <person name="Lim L."/>
            <person name="Boyd J.M."/>
            <person name="Chinnadurai G."/>
        </authorList>
    </citation>
    <scope>NUCLEOTIDE SEQUENCE [MRNA] (ISOFORM 1)</scope>
    <scope>INTERACTION WITH CTBP1</scope>
</reference>
<reference key="3">
    <citation type="journal article" date="2004" name="Nat. Genet.">
        <title>Complete sequencing and characterization of 21,243 full-length human cDNAs.</title>
        <authorList>
            <person name="Ota T."/>
            <person name="Suzuki Y."/>
            <person name="Nishikawa T."/>
            <person name="Otsuki T."/>
            <person name="Sugiyama T."/>
            <person name="Irie R."/>
            <person name="Wakamatsu A."/>
            <person name="Hayashi K."/>
            <person name="Sato H."/>
            <person name="Nagai K."/>
            <person name="Kimura K."/>
            <person name="Makita H."/>
            <person name="Sekine M."/>
            <person name="Obayashi M."/>
            <person name="Nishi T."/>
            <person name="Shibahara T."/>
            <person name="Tanaka T."/>
            <person name="Ishii S."/>
            <person name="Yamamoto J."/>
            <person name="Saito K."/>
            <person name="Kawai Y."/>
            <person name="Isono Y."/>
            <person name="Nakamura Y."/>
            <person name="Nagahari K."/>
            <person name="Murakami K."/>
            <person name="Yasuda T."/>
            <person name="Iwayanagi T."/>
            <person name="Wagatsuma M."/>
            <person name="Shiratori A."/>
            <person name="Sudo H."/>
            <person name="Hosoiri T."/>
            <person name="Kaku Y."/>
            <person name="Kodaira H."/>
            <person name="Kondo H."/>
            <person name="Sugawara M."/>
            <person name="Takahashi M."/>
            <person name="Kanda K."/>
            <person name="Yokoi T."/>
            <person name="Furuya T."/>
            <person name="Kikkawa E."/>
            <person name="Omura Y."/>
            <person name="Abe K."/>
            <person name="Kamihara K."/>
            <person name="Katsuta N."/>
            <person name="Sato K."/>
            <person name="Tanikawa M."/>
            <person name="Yamazaki M."/>
            <person name="Ninomiya K."/>
            <person name="Ishibashi T."/>
            <person name="Yamashita H."/>
            <person name="Murakawa K."/>
            <person name="Fujimori K."/>
            <person name="Tanai H."/>
            <person name="Kimata M."/>
            <person name="Watanabe M."/>
            <person name="Hiraoka S."/>
            <person name="Chiba Y."/>
            <person name="Ishida S."/>
            <person name="Ono Y."/>
            <person name="Takiguchi S."/>
            <person name="Watanabe S."/>
            <person name="Yosida M."/>
            <person name="Hotuta T."/>
            <person name="Kusano J."/>
            <person name="Kanehori K."/>
            <person name="Takahashi-Fujii A."/>
            <person name="Hara H."/>
            <person name="Tanase T.-O."/>
            <person name="Nomura Y."/>
            <person name="Togiya S."/>
            <person name="Komai F."/>
            <person name="Hara R."/>
            <person name="Takeuchi K."/>
            <person name="Arita M."/>
            <person name="Imose N."/>
            <person name="Musashino K."/>
            <person name="Yuuki H."/>
            <person name="Oshima A."/>
            <person name="Sasaki N."/>
            <person name="Aotsuka S."/>
            <person name="Yoshikawa Y."/>
            <person name="Matsunawa H."/>
            <person name="Ichihara T."/>
            <person name="Shiohata N."/>
            <person name="Sano S."/>
            <person name="Moriya S."/>
            <person name="Momiyama H."/>
            <person name="Satoh N."/>
            <person name="Takami S."/>
            <person name="Terashima Y."/>
            <person name="Suzuki O."/>
            <person name="Nakagawa S."/>
            <person name="Senoh A."/>
            <person name="Mizoguchi H."/>
            <person name="Goto Y."/>
            <person name="Shimizu F."/>
            <person name="Wakebe H."/>
            <person name="Hishigaki H."/>
            <person name="Watanabe T."/>
            <person name="Sugiyama A."/>
            <person name="Takemoto M."/>
            <person name="Kawakami B."/>
            <person name="Yamazaki M."/>
            <person name="Watanabe K."/>
            <person name="Kumagai A."/>
            <person name="Itakura S."/>
            <person name="Fukuzumi Y."/>
            <person name="Fujimori Y."/>
            <person name="Komiyama M."/>
            <person name="Tashiro H."/>
            <person name="Tanigami A."/>
            <person name="Fujiwara T."/>
            <person name="Ono T."/>
            <person name="Yamada K."/>
            <person name="Fujii Y."/>
            <person name="Ozaki K."/>
            <person name="Hirao M."/>
            <person name="Ohmori Y."/>
            <person name="Kawabata A."/>
            <person name="Hikiji T."/>
            <person name="Kobatake N."/>
            <person name="Inagaki H."/>
            <person name="Ikema Y."/>
            <person name="Okamoto S."/>
            <person name="Okitani R."/>
            <person name="Kawakami T."/>
            <person name="Noguchi S."/>
            <person name="Itoh T."/>
            <person name="Shigeta K."/>
            <person name="Senba T."/>
            <person name="Matsumura K."/>
            <person name="Nakajima Y."/>
            <person name="Mizuno T."/>
            <person name="Morinaga M."/>
            <person name="Sasaki M."/>
            <person name="Togashi T."/>
            <person name="Oyama M."/>
            <person name="Hata H."/>
            <person name="Watanabe M."/>
            <person name="Komatsu T."/>
            <person name="Mizushima-Sugano J."/>
            <person name="Satoh T."/>
            <person name="Shirai Y."/>
            <person name="Takahashi Y."/>
            <person name="Nakagawa K."/>
            <person name="Okumura K."/>
            <person name="Nagase T."/>
            <person name="Nomura N."/>
            <person name="Kikuchi H."/>
            <person name="Masuho Y."/>
            <person name="Yamashita R."/>
            <person name="Nakai K."/>
            <person name="Yada T."/>
            <person name="Nakamura Y."/>
            <person name="Ohara O."/>
            <person name="Isogai T."/>
            <person name="Sugano S."/>
        </authorList>
    </citation>
    <scope>NUCLEOTIDE SEQUENCE [LARGE SCALE MRNA] (ISOFORM 1)</scope>
    <source>
        <tissue>Testis</tissue>
    </source>
</reference>
<reference key="4">
    <citation type="journal article" date="2007" name="BMC Genomics">
        <title>The full-ORF clone resource of the German cDNA consortium.</title>
        <authorList>
            <person name="Bechtel S."/>
            <person name="Rosenfelder H."/>
            <person name="Duda A."/>
            <person name="Schmidt C.P."/>
            <person name="Ernst U."/>
            <person name="Wellenreuther R."/>
            <person name="Mehrle A."/>
            <person name="Schuster C."/>
            <person name="Bahr A."/>
            <person name="Bloecker H."/>
            <person name="Heubner D."/>
            <person name="Hoerlein A."/>
            <person name="Michel G."/>
            <person name="Wedler H."/>
            <person name="Koehrer K."/>
            <person name="Ottenwaelder B."/>
            <person name="Poustka A."/>
            <person name="Wiemann S."/>
            <person name="Schupp I."/>
        </authorList>
    </citation>
    <scope>NUCLEOTIDE SEQUENCE [LARGE SCALE MRNA] (ISOFORM 3)</scope>
    <source>
        <tissue>Endometrial cancer</tissue>
    </source>
</reference>
<reference key="5">
    <citation type="journal article" date="2005" name="Nature">
        <title>DNA sequence and analysis of human chromosome 18.</title>
        <authorList>
            <person name="Nusbaum C."/>
            <person name="Zody M.C."/>
            <person name="Borowsky M.L."/>
            <person name="Kamal M."/>
            <person name="Kodira C.D."/>
            <person name="Taylor T.D."/>
            <person name="Whittaker C.A."/>
            <person name="Chang J.L."/>
            <person name="Cuomo C.A."/>
            <person name="Dewar K."/>
            <person name="FitzGerald M.G."/>
            <person name="Yang X."/>
            <person name="Abouelleil A."/>
            <person name="Allen N.R."/>
            <person name="Anderson S."/>
            <person name="Bloom T."/>
            <person name="Bugalter B."/>
            <person name="Butler J."/>
            <person name="Cook A."/>
            <person name="DeCaprio D."/>
            <person name="Engels R."/>
            <person name="Garber M."/>
            <person name="Gnirke A."/>
            <person name="Hafez N."/>
            <person name="Hall J.L."/>
            <person name="Norman C.H."/>
            <person name="Itoh T."/>
            <person name="Jaffe D.B."/>
            <person name="Kuroki Y."/>
            <person name="Lehoczky J."/>
            <person name="Lui A."/>
            <person name="Macdonald P."/>
            <person name="Mauceli E."/>
            <person name="Mikkelsen T.S."/>
            <person name="Naylor J.W."/>
            <person name="Nicol R."/>
            <person name="Nguyen C."/>
            <person name="Noguchi H."/>
            <person name="O'Leary S.B."/>
            <person name="Piqani B."/>
            <person name="Smith C.L."/>
            <person name="Talamas J.A."/>
            <person name="Topham K."/>
            <person name="Totoki Y."/>
            <person name="Toyoda A."/>
            <person name="Wain H.M."/>
            <person name="Young S.K."/>
            <person name="Zeng Q."/>
            <person name="Zimmer A.R."/>
            <person name="Fujiyama A."/>
            <person name="Hattori M."/>
            <person name="Birren B.W."/>
            <person name="Sakaki Y."/>
            <person name="Lander E.S."/>
        </authorList>
    </citation>
    <scope>NUCLEOTIDE SEQUENCE [LARGE SCALE GENOMIC DNA]</scope>
</reference>
<reference key="6">
    <citation type="submission" date="2005-07" db="EMBL/GenBank/DDBJ databases">
        <authorList>
            <person name="Mural R.J."/>
            <person name="Istrail S."/>
            <person name="Sutton G."/>
            <person name="Florea L."/>
            <person name="Halpern A.L."/>
            <person name="Mobarry C.M."/>
            <person name="Lippert R."/>
            <person name="Walenz B."/>
            <person name="Shatkay H."/>
            <person name="Dew I."/>
            <person name="Miller J.R."/>
            <person name="Flanigan M.J."/>
            <person name="Edwards N.J."/>
            <person name="Bolanos R."/>
            <person name="Fasulo D."/>
            <person name="Halldorsson B.V."/>
            <person name="Hannenhalli S."/>
            <person name="Turner R."/>
            <person name="Yooseph S."/>
            <person name="Lu F."/>
            <person name="Nusskern D.R."/>
            <person name="Shue B.C."/>
            <person name="Zheng X.H."/>
            <person name="Zhong F."/>
            <person name="Delcher A.L."/>
            <person name="Huson D.H."/>
            <person name="Kravitz S.A."/>
            <person name="Mouchard L."/>
            <person name="Reinert K."/>
            <person name="Remington K.A."/>
            <person name="Clark A.G."/>
            <person name="Waterman M.S."/>
            <person name="Eichler E.E."/>
            <person name="Adams M.D."/>
            <person name="Hunkapiller M.W."/>
            <person name="Myers E.W."/>
            <person name="Venter J.C."/>
        </authorList>
    </citation>
    <scope>NUCLEOTIDE SEQUENCE [LARGE SCALE GENOMIC DNA]</scope>
</reference>
<reference key="7">
    <citation type="journal article" date="2004" name="Genome Res.">
        <title>The status, quality, and expansion of the NIH full-length cDNA project: the Mammalian Gene Collection (MGC).</title>
        <authorList>
            <consortium name="The MGC Project Team"/>
        </authorList>
    </citation>
    <scope>NUCLEOTIDE SEQUENCE [LARGE SCALE MRNA] (ISOFORM 2)</scope>
    <source>
        <tissue>Testis</tissue>
    </source>
</reference>
<reference key="8">
    <citation type="journal article" date="2000" name="J. Biol. Chem.">
        <title>Nuclear localization and cell cycle-specific expression of CtIP, a protein that associates with the BRCA1 tumor suppressor.</title>
        <authorList>
            <person name="Yu X."/>
            <person name="Baer R."/>
        </authorList>
    </citation>
    <scope>FUNCTION</scope>
    <scope>SUBCELLULAR LOCATION</scope>
    <scope>INTERACTION WITH BRCA1</scope>
</reference>
<reference key="9">
    <citation type="journal article" date="2000" name="Nature">
        <title>Functional link of BRCA1 and ataxia telangiectasia gene product in DNA damage response.</title>
        <authorList>
            <person name="Li S."/>
            <person name="Ting N.S.Y."/>
            <person name="Zheng L."/>
            <person name="Chen P.-L."/>
            <person name="Ziv Y."/>
            <person name="Shiloh Y."/>
            <person name="Lee E.Y.-H.P."/>
            <person name="Lee W.-H."/>
        </authorList>
    </citation>
    <scope>FUNCTION</scope>
    <scope>PHOSPHORYLATION AT SER-664 AND SER-745</scope>
    <scope>MUTAGENESIS OF SER-664 AND SER-745</scope>
</reference>
<reference key="10">
    <citation type="journal article" date="2002" name="J. Biol. Chem.">
        <title>The LIM domain protein LMO4 interacts with the cofactor CtIP and the tumor suppressor BRCA1 and inhibits BRCA1 activity.</title>
        <authorList>
            <person name="Sum E.Y."/>
            <person name="Peng B."/>
            <person name="Yu X."/>
            <person name="Chen J."/>
            <person name="Byrne J."/>
            <person name="Lindeman G.J."/>
            <person name="Visvader J.E."/>
        </authorList>
    </citation>
    <scope>INTERACTION WITH LMO4</scope>
</reference>
<reference key="11">
    <citation type="journal article" date="2003" name="Oncogene">
        <title>SIAH-1 interacts with CtIP and promotes its degradation by the proteasome pathway.</title>
        <authorList>
            <person name="Germani A."/>
            <person name="Prabel A."/>
            <person name="Mourah S."/>
            <person name="Podgorniak M.-P."/>
            <person name="Di Carlo A."/>
            <person name="Ehrlich R."/>
            <person name="Gisselbrecht S."/>
            <person name="Varin-Blank N."/>
            <person name="Calvo F."/>
            <person name="Bruzzoni-Giovanelli H."/>
        </authorList>
    </citation>
    <scope>INTERACTION WITH SIAH1</scope>
    <scope>UBIQUITINATION</scope>
</reference>
<reference key="12">
    <citation type="journal article" date="2004" name="J. Biol. Chem.">
        <title>Dimerization of CtIP, a BRCA1- and CtBP-interacting protein, is mediated by an N-terminal coiled-coil motif.</title>
        <authorList>
            <person name="Dubin M.J."/>
            <person name="Stokes P.H."/>
            <person name="Sum E.Y."/>
            <person name="Williams R.S."/>
            <person name="Valova V.A."/>
            <person name="Robinson P.J."/>
            <person name="Lindeman G.J."/>
            <person name="Glover J.N."/>
            <person name="Visvader J.E."/>
            <person name="Matthews J.M."/>
        </authorList>
    </citation>
    <scope>SUBUNIT</scope>
    <scope>IDENTIFICATION BY MASS SPECTROMETRY</scope>
</reference>
<reference key="13">
    <citation type="journal article" date="2004" name="Mol. Cell. Biol.">
        <title>DNA damage-induced cell cycle checkpoint control requires CtIP, a phosphorylation-dependent binding partner of BRCA1 C-terminal domains.</title>
        <authorList>
            <person name="Yu X."/>
            <person name="Chen J."/>
        </authorList>
    </citation>
    <scope>FUNCTION</scope>
    <scope>PHOSPHORYLATION AT SER-327</scope>
    <scope>INTERACTION WITH BRCA1</scope>
    <scope>MUTAGENESIS OF SER-327</scope>
</reference>
<reference key="14">
    <citation type="journal article" date="2006" name="Genes Dev.">
        <title>BRCA1 ubiquitinates its phosphorylation-dependent binding partner CtIP.</title>
        <authorList>
            <person name="Yu X."/>
            <person name="Fu S."/>
            <person name="Lai M."/>
            <person name="Baer R."/>
            <person name="Chen J."/>
        </authorList>
    </citation>
    <scope>INTERACTION WITH BRCA1</scope>
    <scope>FUNCTION</scope>
    <scope>SUBCELLULAR LOCATION</scope>
    <scope>UBIQUITINATION</scope>
    <scope>MUTAGENESIS OF SER-327</scope>
</reference>
<reference key="15">
    <citation type="journal article" date="2006" name="Mol. Cell. Biol.">
        <title>CtIP activates its own and cyclin D1 promoters via the E2F/RB pathway during G1/S progression.</title>
        <authorList>
            <person name="Liu F."/>
            <person name="Lee W.H."/>
        </authorList>
    </citation>
    <scope>FUNCTION</scope>
</reference>
<reference key="16">
    <citation type="journal article" date="2007" name="Mol. Cancer Res.">
        <title>CtIP silencing as a novel mechanism of tamoxifen resistance in breast cancer.</title>
        <authorList>
            <person name="Wu M."/>
            <person name="Soler D.R."/>
            <person name="Abba M.C."/>
            <person name="Nunez M.I."/>
            <person name="Baer R."/>
            <person name="Hatzis C."/>
            <person name="Llombart-Cussac A."/>
            <person name="Llombart-Bosch A."/>
            <person name="Aldaz C.M."/>
        </authorList>
    </citation>
    <scope>DISEASE</scope>
    <scope>TISSUE SPECIFICITY</scope>
</reference>
<reference key="17">
    <citation type="journal article" date="2007" name="Nature">
        <title>Human CtIP promotes DNA end resection.</title>
        <authorList>
            <person name="Sartori A.A."/>
            <person name="Lukas C."/>
            <person name="Coates J."/>
            <person name="Mistrik M."/>
            <person name="Fu S."/>
            <person name="Bartek J."/>
            <person name="Baer R."/>
            <person name="Lukas J."/>
            <person name="Jackson S.P."/>
        </authorList>
    </citation>
    <scope>FUNCTION</scope>
    <scope>PHOSPHORYLATION AT SER-326; SER-349 AND SER-679</scope>
    <scope>SUBCELLULAR LOCATION</scope>
    <scope>INTERACTION WITH BRCA1; MRE11 AND RAD50</scope>
</reference>
<reference key="18">
    <citation type="journal article" date="2009" name="Hum. Mol. Genet.">
        <title>Functional complementation studies identify candidate genes and common genetic variants associated with ovarian cancer survival.</title>
        <authorList>
            <person name="Quaye L."/>
            <person name="Dafou D."/>
            <person name="Ramus S.J."/>
            <person name="Song H."/>
            <person name="Gentry-Maharaj A."/>
            <person name="Notaridou M."/>
            <person name="Hogdall E."/>
            <person name="Kjaer S.K."/>
            <person name="Christensen L."/>
            <person name="Hogdall C."/>
            <person name="Easton D.F."/>
            <person name="Jacobs I."/>
            <person name="Menon U."/>
            <person name="Pharoah P.D."/>
            <person name="Gayther S.A."/>
        </authorList>
    </citation>
    <scope>ASSOCIATION WITH OVARIAN CANCER SURVIVAL</scope>
</reference>
<reference key="19">
    <citation type="journal article" date="2009" name="J. Biol. Chem.">
        <title>Human CtIP mediates cell cycle control of DNA end resection and double strand break repair.</title>
        <authorList>
            <person name="Huertas P."/>
            <person name="Jackson S.P."/>
        </authorList>
    </citation>
    <scope>FUNCTION</scope>
    <scope>DNA-BINDING</scope>
    <scope>PHOSPHORYLATION AT THR-847</scope>
    <scope>MUTAGENESIS OF THR-847</scope>
</reference>
<reference key="20">
    <citation type="journal article" date="2009" name="J. Biol. Chem.">
        <title>N terminus of CtIP is critical for homologous recombination-mediated double-strand break repair.</title>
        <authorList>
            <person name="Yuan J."/>
            <person name="Chen J."/>
        </authorList>
    </citation>
    <scope>FUNCTION</scope>
    <scope>INTERACTION WITH MRE11; RAD50 AND NBN</scope>
    <scope>MUTAGENESIS OF HIS-31; VAL-35; LYS-41 AND LEU-45</scope>
</reference>
<reference key="21">
    <citation type="journal article" date="2009" name="Mol. Cell">
        <title>CtIP links DNA double-strand break sensing to resection.</title>
        <authorList>
            <person name="You Z."/>
            <person name="Shi L.Z."/>
            <person name="Zhu Q."/>
            <person name="Wu P."/>
            <person name="Zhang Y.W."/>
            <person name="Basilio A."/>
            <person name="Tonnu N."/>
            <person name="Verma I.M."/>
            <person name="Berns M.W."/>
            <person name="Hunter T."/>
        </authorList>
    </citation>
    <scope>FUNCTION</scope>
    <scope>MUTAGENESIS OF LYS-513 AND LYS-515</scope>
</reference>
<reference key="22">
    <citation type="journal article" date="2009" name="Sci. Signal.">
        <title>Quantitative phosphoproteomic analysis of T cell receptor signaling reveals system-wide modulation of protein-protein interactions.</title>
        <authorList>
            <person name="Mayya V."/>
            <person name="Lundgren D.H."/>
            <person name="Hwang S.-I."/>
            <person name="Rezaul K."/>
            <person name="Wu L."/>
            <person name="Eng J.K."/>
            <person name="Rodionov V."/>
            <person name="Han D.K."/>
        </authorList>
    </citation>
    <scope>IDENTIFICATION BY MASS SPECTROMETRY [LARGE SCALE ANALYSIS]</scope>
    <source>
        <tissue>Leukemic T-cell</tissue>
    </source>
</reference>
<reference key="23">
    <citation type="journal article" date="2010" name="Sci. Signal.">
        <title>Quantitative phosphoproteomics reveals widespread full phosphorylation site occupancy during mitosis.</title>
        <authorList>
            <person name="Olsen J.V."/>
            <person name="Vermeulen M."/>
            <person name="Santamaria A."/>
            <person name="Kumar C."/>
            <person name="Miller M.L."/>
            <person name="Jensen L.J."/>
            <person name="Gnad F."/>
            <person name="Cox J."/>
            <person name="Jensen T.S."/>
            <person name="Nigg E.A."/>
            <person name="Brunak S."/>
            <person name="Mann M."/>
        </authorList>
    </citation>
    <scope>PHOSPHORYLATION [LARGE SCALE ANALYSIS] AT SER-723</scope>
    <scope>IDENTIFICATION BY MASS SPECTROMETRY [LARGE SCALE ANALYSIS]</scope>
    <source>
        <tissue>Cervix carcinoma</tissue>
    </source>
</reference>
<reference key="24">
    <citation type="journal article" date="2010" name="Science">
        <title>Human SIRT6 promotes DNA end resection through CtIP deacetylation.</title>
        <authorList>
            <person name="Kaidi A."/>
            <person name="Weinert B.T."/>
            <person name="Choudhary C."/>
            <person name="Jackson S.P."/>
        </authorList>
    </citation>
    <scope>RETRACTED PAPER</scope>
</reference>
<reference key="25">
    <citation type="journal article" date="2019" name="Science">
        <authorList>
            <person name="Kaidi A."/>
            <person name="Weinert B.T."/>
            <person name="Choudhary C."/>
            <person name="Jackson S.P."/>
        </authorList>
    </citation>
    <scope>RETRACTION NOTICE OF PUBMED:20829486</scope>
</reference>
<reference key="26">
    <citation type="journal article" date="2011" name="Cancer Res.">
        <title>Modification of BRCA1-associated breast and ovarian cancer risk by BRCA1-interacting genes.</title>
        <authorList>
            <person name="Rebbeck T.R."/>
            <person name="Mitra N."/>
            <person name="Domchek S.M."/>
            <person name="Wan F."/>
            <person name="Friebel T.M."/>
            <person name="Tran T.V."/>
            <person name="Singer C.F."/>
            <person name="Tea M.K."/>
            <person name="Blum J.L."/>
            <person name="Tung N."/>
            <person name="Olopade O.I."/>
            <person name="Weitzel J.N."/>
            <person name="Lynch H.T."/>
            <person name="Snyder C.L."/>
            <person name="Garber J.E."/>
            <person name="Antoniou A.C."/>
            <person name="Peock S."/>
            <person name="Evans D.G."/>
            <person name="Paterson J."/>
            <person name="Kennedy M.J."/>
            <person name="Donaldson A."/>
            <person name="Dorkins H."/>
            <person name="Easton D.F."/>
            <person name="Rubinstein W.S."/>
            <person name="Daly M.B."/>
            <person name="Isaacs C."/>
            <person name="Nevanlinna H."/>
            <person name="Couch F.J."/>
            <person name="Andrulis I.L."/>
            <person name="Freidman E."/>
            <person name="Laitman Y."/>
            <person name="Ganz P.A."/>
            <person name="Tomlinson G.E."/>
            <person name="Neuhausen S.L."/>
            <person name="Narod S.A."/>
            <person name="Phelan C.M."/>
            <person name="Greenberg R."/>
            <person name="Nathanson K.L."/>
        </authorList>
    </citation>
    <scope>ASSOCIATION WITH BREAST CANCER</scope>
</reference>
<reference key="27">
    <citation type="journal article" date="2011" name="PLoS Genet.">
        <title>CtIP mutations cause Seckel and Jawad syndromes.</title>
        <authorList>
            <person name="Jackson S.P."/>
            <person name="Borglum A.D."/>
        </authorList>
    </citation>
    <scope>INVOLVEMENT IN JWDS</scope>
    <scope>INVOLVEMENT IN SCKL2</scope>
</reference>
<reference key="28">
    <citation type="journal article" date="2013" name="J. Proteome Res.">
        <title>Toward a comprehensive characterization of a human cancer cell phosphoproteome.</title>
        <authorList>
            <person name="Zhou H."/>
            <person name="Di Palma S."/>
            <person name="Preisinger C."/>
            <person name="Peng M."/>
            <person name="Polat A.N."/>
            <person name="Heck A.J."/>
            <person name="Mohammed S."/>
        </authorList>
    </citation>
    <scope>PHOSPHORYLATION [LARGE SCALE ANALYSIS] AT SER-233; THR-315; SER-327; SER-379 AND SER-723</scope>
    <scope>IDENTIFICATION BY MASS SPECTROMETRY [LARGE SCALE ANALYSIS]</scope>
    <source>
        <tissue>Cervix carcinoma</tissue>
        <tissue>Erythroleukemia</tissue>
    </source>
</reference>
<reference key="29">
    <citation type="journal article" date="2013" name="Mol. Cell">
        <title>Activation of DSB processing requires phosphorylation of CtIP by ATR.</title>
        <authorList>
            <person name="Peterson S.E."/>
            <person name="Li Y."/>
            <person name="Wu-Baer F."/>
            <person name="Chait B.T."/>
            <person name="Baer R."/>
            <person name="Yan H."/>
            <person name="Gottesman M.E."/>
            <person name="Gautier J."/>
        </authorList>
    </citation>
    <scope>FUNCTION</scope>
    <scope>PHOSPHORYLATION AT THR-859</scope>
    <scope>MUTAGENESIS OF THR-859</scope>
</reference>
<reference key="30">
    <citation type="journal article" date="2013" name="Mol. Cell">
        <title>Prolyl isomerase PIN1 regulates DNA double-strand break repair by counteracting DNA end resection.</title>
        <authorList>
            <person name="Steger M."/>
            <person name="Murina O."/>
            <person name="Huehn D."/>
            <person name="Ferretti L.P."/>
            <person name="Walser R."/>
            <person name="Haenggi K."/>
            <person name="Lafranchi L."/>
            <person name="Neugebauer C."/>
            <person name="Paliwal S."/>
            <person name="Janscak P."/>
            <person name="Gerrits B."/>
            <person name="Del Sal G."/>
            <person name="Zerbe O."/>
            <person name="Sartori A.A."/>
        </authorList>
    </citation>
    <scope>INTERACTION WITH BRCA1; MRE11 AND PIN1</scope>
    <scope>SUBCELLULAR LOCATION</scope>
    <scope>MUTAGENESIS OF SER-276 AND THR-315</scope>
    <scope>PHOSPHORYLATION AT SER-276 AND THR-315</scope>
</reference>
<reference key="31">
    <citation type="journal article" date="2014" name="EMBO J.">
        <title>APC/C(Cdh1) controls CtIP stability during the cell cycle and in response to DNA damage.</title>
        <authorList>
            <person name="Lafranchi L."/>
            <person name="de Boer H.R."/>
            <person name="de Vries E.G."/>
            <person name="Ong S.E."/>
            <person name="Sartori A.A."/>
            <person name="van Vugt M.A."/>
        </authorList>
    </citation>
    <scope>INTERACTION WITH FZR1</scope>
    <scope>SUBCELLULAR LOCATION</scope>
    <scope>INDUCTION DURING THE CELL CYCLE</scope>
    <scope>MUTAGENESIS OF LYS-179 AND LYS-467</scope>
</reference>
<reference key="32">
    <citation type="journal article" date="2014" name="Nat. Struct. Mol. Biol.">
        <title>Uncovering global SUMOylation signaling networks in a site-specific manner.</title>
        <authorList>
            <person name="Hendriks I.A."/>
            <person name="D'Souza R.C."/>
            <person name="Yang B."/>
            <person name="Verlaan-de Vries M."/>
            <person name="Mann M."/>
            <person name="Vertegaal A.C."/>
        </authorList>
    </citation>
    <scope>SUMOYLATION [LARGE SCALE ANALYSIS] AT LYS-869</scope>
    <scope>IDENTIFICATION BY MASS SPECTROMETRY [LARGE SCALE ANALYSIS]</scope>
</reference>
<reference key="33">
    <citation type="journal article" date="2015" name="Mol. Cell. Proteomics">
        <title>System-wide analysis of SUMOylation dynamics in response to replication stress reveals novel small ubiquitin-like modified target proteins and acceptor lysines relevant for genome stability.</title>
        <authorList>
            <person name="Xiao Z."/>
            <person name="Chang J.G."/>
            <person name="Hendriks I.A."/>
            <person name="Sigurdsson J.O."/>
            <person name="Olsen J.V."/>
            <person name="Vertegaal A.C."/>
        </authorList>
    </citation>
    <scope>SUMOYLATION [LARGE SCALE ANALYSIS] AT LYS-193; LYS-378; LYS-604; LYS-613 AND LYS-869</scope>
    <scope>IDENTIFICATION BY MASS SPECTROMETRY [LARGE SCALE ANALYSIS]</scope>
</reference>
<reference key="34">
    <citation type="journal article" date="2016" name="Mol. Cell">
        <title>Nbs1 converts the human Mre11/Rad50 nuclease complex into an endo/exonuclease machine specific for protein-DNA adducts.</title>
        <authorList>
            <person name="Deshpande R.A."/>
            <person name="Lee J.H."/>
            <person name="Arora S."/>
            <person name="Paull T.T."/>
        </authorList>
    </citation>
    <scope>FUNCTION</scope>
    <scope>SUBCELLULAR LOCATION</scope>
    <scope>INTERACTION WITH NBN</scope>
    <scope>PHOSPHORYLATION AT THR-847 AND THR-859</scope>
    <scope>MUTAGENESIS OF THR-847 AND THR-859</scope>
</reference>
<reference key="35">
    <citation type="journal article" date="2016" name="Mol. Cell">
        <title>Phosphorylated CtIP functions as a co-factor of the MRE11-RAD50-NBS1 endonuclease in DNA end resection.</title>
        <authorList>
            <person name="Anand R."/>
            <person name="Ranjha L."/>
            <person name="Cannavo E."/>
            <person name="Cejka P."/>
        </authorList>
    </citation>
    <scope>FUNCTION</scope>
    <scope>SUBCELLULAR LOCATION</scope>
    <scope>INTERACTION WITH NBN</scope>
    <scope>PHOSPHORYLATION AT THR-847</scope>
    <scope>MUTAGENESIS OF THR-847</scope>
</reference>
<reference key="36">
    <citation type="journal article" date="2016" name="Nat. Commun.">
        <title>Cullin3-KLHL15 ubiquitin ligase mediates CtIP protein turnover to fine-tune DNA-end resection.</title>
        <authorList>
            <person name="Ferretti L.P."/>
            <person name="Himmels S.F."/>
            <person name="Trenner A."/>
            <person name="Walker C."/>
            <person name="von Aesch C."/>
            <person name="Eggenschwiler A."/>
            <person name="Murina O."/>
            <person name="Enchev R.I."/>
            <person name="Peter M."/>
            <person name="Freire R."/>
            <person name="Porro A."/>
            <person name="Sartori A.A."/>
        </authorList>
    </citation>
    <scope>INTERACTION WITH CUL3 AND KLHL15</scope>
    <scope>UBIQUITINATION</scope>
    <scope>MUTAGENESIS OF SER-276; THR-315; LYS-467; ARG-839; PHE-840 AND TYR-842</scope>
</reference>
<reference key="37">
    <citation type="journal article" date="2016" name="Nucleic Acids Res.">
        <title>Hepatoma-derived growth factor-related protein 2 promotes DNA repair by homologous recombination.</title>
        <authorList>
            <person name="Baude A."/>
            <person name="Aaes T.L."/>
            <person name="Zhai B."/>
            <person name="Al-Nakouzi N."/>
            <person name="Oo H.Z."/>
            <person name="Daugaard M."/>
            <person name="Rohde M."/>
            <person name="Jaeaettelae M."/>
        </authorList>
    </citation>
    <scope>FUNCTION</scope>
    <scope>INTERACTION WITH HDGFL2</scope>
</reference>
<reference key="38">
    <citation type="journal article" date="2017" name="Nat. Struct. Mol. Biol.">
        <title>Site-specific mapping of the human SUMO proteome reveals co-modification with phosphorylation.</title>
        <authorList>
            <person name="Hendriks I.A."/>
            <person name="Lyon D."/>
            <person name="Young C."/>
            <person name="Jensen L.J."/>
            <person name="Vertegaal A.C."/>
            <person name="Nielsen M.L."/>
        </authorList>
    </citation>
    <scope>SUMOYLATION [LARGE SCALE ANALYSIS] AT LYS-62; LYS-115; LYS-193; LYS-360; LYS-378; LYS-396; LYS-404; LYS-410; LYS-438; LYS-449; LYS-526; LYS-530; LYS-572; LYS-578; LYS-604; LYS-613; LYS-638; LYS-640; LYS-676; LYS-719; LYS-782 AND LYS-869</scope>
    <scope>IDENTIFICATION BY MASS SPECTROMETRY [LARGE SCALE ANALYSIS]</scope>
</reference>
<reference key="39">
    <citation type="journal article" date="2014" name="Genome Res.">
        <title>Genomic analysis of primordial dwarfism reveals novel disease genes.</title>
        <authorList>
            <person name="Shaheen R."/>
            <person name="Faqeih E."/>
            <person name="Ansari S."/>
            <person name="Abdel-Salam G."/>
            <person name="Al-Hassnan Z.N."/>
            <person name="Al-Shidi T."/>
            <person name="Alomar R."/>
            <person name="Sogaty S."/>
            <person name="Alkuraya F.S."/>
        </authorList>
    </citation>
    <scope>VARIANT SCKL2 TRP-100</scope>
</reference>
<reference key="40">
    <citation type="journal article" date="2015" name="Nat. Cell Biol.">
        <title>Systematic E2 screening reveals a UBE2D-RNF138-CtIP axis promoting DNA repair.</title>
        <authorList>
            <person name="Schmidt C.K."/>
            <person name="Galanty Y."/>
            <person name="Sczaniecka-Clift M."/>
            <person name="Coates J."/>
            <person name="Jhujh S."/>
            <person name="Demir M."/>
            <person name="Cornwell M."/>
            <person name="Beli P."/>
            <person name="Jackson S.P."/>
        </authorList>
    </citation>
    <scope>UBIQUITINATION</scope>
    <scope>INTERACTION WITH RNF138</scope>
    <scope>MUTAGENESIS OF LYS-62; LYS-78; LYS-115; LYS-132; LYS-133; LYS-404; LYS-572; LYS-578; LYS-640; LYS-759; LYS-760 AND LYS-782</scope>
</reference>
<reference key="41">
    <citation type="journal article" date="2016" name="Nat. Cell Biol.">
        <title>EXD2 promotes homologous recombination by facilitating DNA end resection.</title>
        <authorList>
            <person name="Broderick R."/>
            <person name="Nieminuszczy J."/>
            <person name="Baddock H.T."/>
            <person name="Deshpande R.A."/>
            <person name="Gileadi O."/>
            <person name="Paull T.T."/>
            <person name="McHugh P.J."/>
            <person name="Niedzwiedz W."/>
        </authorList>
    </citation>
    <scope>INTERACTION WITH EXD2</scope>
</reference>
<reference key="42">
    <citation type="journal article" date="2017" name="Cell Rep.">
        <title>SAMHD1 promotes DNA end resection to facilitate DNA repair by homologous recombination.</title>
        <authorList>
            <person name="Daddacha W."/>
            <person name="Koyen A.E."/>
            <person name="Bastien A.J."/>
            <person name="Head P.E."/>
            <person name="Dhere V.R."/>
            <person name="Nabeta G.N."/>
            <person name="Connolly E.C."/>
            <person name="Werner E."/>
            <person name="Madden M.Z."/>
            <person name="Daly M.B."/>
            <person name="Minten E.V."/>
            <person name="Whelan D.R."/>
            <person name="Schlafstein A.J."/>
            <person name="Zhang H."/>
            <person name="Anand R."/>
            <person name="Doronio C."/>
            <person name="Withers A.E."/>
            <person name="Shepard C."/>
            <person name="Sundaram R.K."/>
            <person name="Deng X."/>
            <person name="Dynan W.S."/>
            <person name="Wang Y."/>
            <person name="Bindra R.S."/>
            <person name="Cejka P."/>
            <person name="Rothenberg E."/>
            <person name="Doetsch P.W."/>
            <person name="Kim B."/>
            <person name="Yu D.S."/>
        </authorList>
    </citation>
    <scope>INTERACTION WITH SAMHD1</scope>
</reference>
<reference key="43">
    <citation type="journal article" date="2017" name="Nat. Commun.">
        <title>AUNIP/C1orf135 directs DNA double-strand breaks towards the homologous recombination repair pathway.</title>
        <authorList>
            <person name="Lou J."/>
            <person name="Chen H."/>
            <person name="Han J."/>
            <person name="He H."/>
            <person name="Huen M.S.Y."/>
            <person name="Feng X.H."/>
            <person name="Liu T."/>
            <person name="Huang J."/>
        </authorList>
    </citation>
    <scope>INTERACTION WITH AUNIP</scope>
    <scope>SUBCELLULAR LOCATION</scope>
</reference>
<reference key="44">
    <citation type="journal article" date="2019" name="Elife">
        <title>CtIP forms a tetrameric dumbbell-shaped particle which bridges complex DNA end structures for double-strand break repair.</title>
        <authorList>
            <person name="Wilkinson O.J."/>
            <person name="Martin-Gonzalez A."/>
            <person name="Kang H."/>
            <person name="Northall S.J."/>
            <person name="Wigley D.B."/>
            <person name="Moreno-Herrero F."/>
            <person name="Dillingham M.S."/>
        </authorList>
    </citation>
    <scope>FUNCTION</scope>
    <scope>SUBUNIT</scope>
    <scope>PHOSPHORYLATION</scope>
    <scope>MUTAGENESIS OF LEU-27 AND ARG-839</scope>
</reference>
<reference key="45">
    <citation type="journal article" date="2019" name="EMBO J.">
        <title>NBS1 promotes the endonuclease activity of the MRE11-RAD50 complex by sensing CtIP phosphorylation.</title>
        <authorList>
            <person name="Anand R."/>
            <person name="Jasrotia A."/>
            <person name="Bundschuh D."/>
            <person name="Howard S.M."/>
            <person name="Ranjha L."/>
            <person name="Stucki M."/>
            <person name="Cejka P."/>
        </authorList>
    </citation>
    <scope>FUNCTION</scope>
</reference>
<reference key="46">
    <citation type="journal article" date="2021" name="Proc. Natl. Acad. Sci. U.S.A.">
        <title>A conserved Ctp1/CtIP C-terminal peptide stimulates Mre11 endonuclease activity.</title>
        <authorList>
            <person name="Zdravkovic A."/>
            <person name="Daley J.M."/>
            <person name="Dutta A."/>
            <person name="Niwa T."/>
            <person name="Murayama Y."/>
            <person name="Kanamaru S."/>
            <person name="Ito K."/>
            <person name="Maki T."/>
            <person name="Argunhan B."/>
            <person name="Takahashi M."/>
            <person name="Tsubouchi H."/>
            <person name="Sung P."/>
            <person name="Iwasaki H."/>
        </authorList>
    </citation>
    <scope>FUNCTION</scope>
    <scope>SUBCELLULAR LOCATION</scope>
    <scope>INTERACTION WITH NBN</scope>
    <scope>PHOSPHORYLATION AT THR-847 AND THR-859</scope>
</reference>
<reference key="47">
    <citation type="journal article" date="2022" name="Mol. Cell">
        <title>Micropeptide PACMP inhibition elicits synthetic lethal effects by decreasing CtIP and poly(ADP-ribosyl)ation.</title>
        <authorList>
            <person name="Zhang C."/>
            <person name="Zhou B."/>
            <person name="Gu F."/>
            <person name="Liu H."/>
            <person name="Wu H."/>
            <person name="Yao F."/>
            <person name="Zheng H."/>
            <person name="Fu H."/>
            <person name="Chong W."/>
            <person name="Cai S."/>
            <person name="Huang M."/>
            <person name="Ma X."/>
            <person name="Guo Z."/>
            <person name="Li T."/>
            <person name="Deng W."/>
            <person name="Zheng M."/>
            <person name="Ji Q."/>
            <person name="Zhao Y."/>
            <person name="Ma Y."/>
            <person name="Wang Q.E."/>
            <person name="Tang T.S."/>
            <person name="Guo C."/>
        </authorList>
    </citation>
    <scope>UBIQUITINATION</scope>
    <scope>MUTAGENESIS OF TYR-842</scope>
</reference>
<reference evidence="45" key="48">
    <citation type="journal article" date="2005" name="Biochemistry">
        <title>Structural basis for cell cycle checkpoint control by the BRCA1-CtIP complex.</title>
        <authorList>
            <person name="Varma A.K."/>
            <person name="Brown R.S."/>
            <person name="Birrane G."/>
            <person name="Ladias J.A."/>
        </authorList>
    </citation>
    <scope>X-RAY CRYSTALLOGRAPHY (2.5 ANGSTROMS) OF 322-333 IN PHOSPHORYLATED FORM IN COMPLEX WITH BRCA1</scope>
    <scope>INTERACTION WITH BRCA1</scope>
</reference>
<reference evidence="45" key="49">
    <citation type="journal article" date="2013" name="J. Mol. Biol.">
        <title>Structural basis of the interaction of the breast cancer oncogene LMO4 with the tumour suppressor CtIP/RBBP8.</title>
        <authorList>
            <person name="Stokes P.H."/>
            <person name="Liew C.W."/>
            <person name="Kwan A.H."/>
            <person name="Foo P."/>
            <person name="Barker H.E."/>
            <person name="Djamirze A."/>
            <person name="O'Reilly V."/>
            <person name="Visvader J.E."/>
            <person name="Mackay J.P."/>
            <person name="Matthews J.M."/>
        </authorList>
    </citation>
    <scope>STRUCTURE BY NMR OF 641-685 IN COMPLEX WITH MOUSE LMO4</scope>
    <scope>INTERACTION WITH LMO4</scope>
</reference>
<reference evidence="46" key="50">
    <citation type="journal article" date="2015" name="Nat. Struct. Mol. Biol.">
        <title>CtIP tetramer assembly is required for DNA-end resection and repair.</title>
        <authorList>
            <person name="Davies O.R."/>
            <person name="Forment J.V."/>
            <person name="Sun M."/>
            <person name="Belotserkovskaya R."/>
            <person name="Coates J."/>
            <person name="Galanty Y."/>
            <person name="Demir M."/>
            <person name="Morton C.R."/>
            <person name="Rzechorzek N.J."/>
            <person name="Jackson S.P."/>
            <person name="Pellegrini L."/>
        </authorList>
    </citation>
    <scope>X-RAY CRYSTALLOGRAPHY (1.90 ANGSTROMS) OF 18-52</scope>
    <scope>SUBUNIT</scope>
    <scope>INTERACTION WITH MRE11; NBN AND RAD50</scope>
    <scope>ZN(2+)-BINDING</scope>
    <scope>MUTAGENESIS OF LEU-27; CYS-89 AND CYS-92</scope>
</reference>
<reference evidence="47" key="51">
    <citation type="journal article" date="2021" name="Open Biol.">
        <title>Structural basis for the coiled-coil architecture of human CtIP.</title>
        <authorList>
            <person name="Morton C.R."/>
            <person name="Rzechorzek N.J."/>
            <person name="Maman J.D."/>
            <person name="Kuramochi M."/>
            <person name="Sekiguchi H."/>
            <person name="Rambo R."/>
            <person name="Sasaki Y.C."/>
            <person name="Davies O.R."/>
            <person name="Pellegrini L."/>
        </authorList>
    </citation>
    <scope>X-RAY CRYSTALLOGRAPHY (2.80 ANGSTROMS) OF 31-152 OF MUTANT ALA-89 AND ALA-93</scope>
    <scope>SUBUNIT</scope>
</reference>